<comment type="function">
    <text evidence="2 8 10">Catalyzes the first and rate-limiting reaction of the four reactions that constitute the long-chain fatty acids elongation cycle. This endoplasmic reticulum-bound enzymatic process allows the addition of 2 carbons to the chain of long- and very long-chain fatty acids (VLCFAs) per cycle. Condensing enzyme that catalyzes the synthesis of very long chain saturated (VLC-SFA) and polyunsaturated (PUFA) fatty acids that are involved in multiple biological processes as precursors of membrane lipids and lipid mediators. May play a critical role in early brain and skin development.</text>
</comment>
<comment type="catalytic activity">
    <reaction evidence="2 8">
        <text>a very-long-chain acyl-CoA + malonyl-CoA + H(+) = a very-long-chain 3-oxoacyl-CoA + CO2 + CoA</text>
        <dbReference type="Rhea" id="RHEA:32727"/>
        <dbReference type="ChEBI" id="CHEBI:15378"/>
        <dbReference type="ChEBI" id="CHEBI:16526"/>
        <dbReference type="ChEBI" id="CHEBI:57287"/>
        <dbReference type="ChEBI" id="CHEBI:57384"/>
        <dbReference type="ChEBI" id="CHEBI:90725"/>
        <dbReference type="ChEBI" id="CHEBI:90736"/>
        <dbReference type="EC" id="2.3.1.199"/>
    </reaction>
    <physiologicalReaction direction="left-to-right" evidence="13">
        <dbReference type="Rhea" id="RHEA:32728"/>
    </physiologicalReaction>
</comment>
<comment type="catalytic activity">
    <reaction evidence="8">
        <text>tetracosanoyl-CoA + malonyl-CoA + H(+) = 3-oxohexacosanoyl-CoA + CO2 + CoA</text>
        <dbReference type="Rhea" id="RHEA:36515"/>
        <dbReference type="ChEBI" id="CHEBI:15378"/>
        <dbReference type="ChEBI" id="CHEBI:16526"/>
        <dbReference type="ChEBI" id="CHEBI:57287"/>
        <dbReference type="ChEBI" id="CHEBI:57384"/>
        <dbReference type="ChEBI" id="CHEBI:65052"/>
        <dbReference type="ChEBI" id="CHEBI:73980"/>
    </reaction>
    <physiologicalReaction direction="left-to-right" evidence="13">
        <dbReference type="Rhea" id="RHEA:36516"/>
    </physiologicalReaction>
</comment>
<comment type="catalytic activity">
    <reaction evidence="8">
        <text>hexacosanoyl-CoA + malonyl-CoA + H(+) = 3-oxooctacosanyol-CoA + CO2 + CoA</text>
        <dbReference type="Rhea" id="RHEA:36519"/>
        <dbReference type="ChEBI" id="CHEBI:15378"/>
        <dbReference type="ChEBI" id="CHEBI:16526"/>
        <dbReference type="ChEBI" id="CHEBI:57287"/>
        <dbReference type="ChEBI" id="CHEBI:57384"/>
        <dbReference type="ChEBI" id="CHEBI:64868"/>
        <dbReference type="ChEBI" id="CHEBI:73976"/>
    </reaction>
    <physiologicalReaction direction="left-to-right" evidence="13">
        <dbReference type="Rhea" id="RHEA:36520"/>
    </physiologicalReaction>
</comment>
<comment type="catalytic activity">
    <reaction evidence="1">
        <text>octacosanoyl-CoA + malonyl-CoA + H(+) = 3-oxo-triacontanoyl-CoA + CO2 + CoA</text>
        <dbReference type="Rhea" id="RHEA:36807"/>
        <dbReference type="ChEBI" id="CHEBI:15378"/>
        <dbReference type="ChEBI" id="CHEBI:16526"/>
        <dbReference type="ChEBI" id="CHEBI:57287"/>
        <dbReference type="ChEBI" id="CHEBI:57384"/>
        <dbReference type="ChEBI" id="CHEBI:74141"/>
        <dbReference type="ChEBI" id="CHEBI:74228"/>
    </reaction>
    <physiologicalReaction direction="left-to-right" evidence="1">
        <dbReference type="Rhea" id="RHEA:36808"/>
    </physiologicalReaction>
</comment>
<comment type="catalytic activity">
    <reaction evidence="1">
        <text>triacontanoyl-CoA + malonyl-CoA + H(+) = 3-oxo-dotriacontanoyl-CoA + CO2 + CoA</text>
        <dbReference type="Rhea" id="RHEA:43852"/>
        <dbReference type="ChEBI" id="CHEBI:15378"/>
        <dbReference type="ChEBI" id="CHEBI:16526"/>
        <dbReference type="ChEBI" id="CHEBI:57287"/>
        <dbReference type="ChEBI" id="CHEBI:57384"/>
        <dbReference type="ChEBI" id="CHEBI:76386"/>
        <dbReference type="ChEBI" id="CHEBI:83795"/>
    </reaction>
    <physiologicalReaction direction="left-to-right" evidence="1">
        <dbReference type="Rhea" id="RHEA:43853"/>
    </physiologicalReaction>
</comment>
<comment type="catalytic activity">
    <reaction evidence="1">
        <text>(19Z,22Z,25Z,28Z,31Z)-tetratriacontapentaenoyl-CoA + malonyl-CoA + H(+) = 3-oxo-(21Z,24Z,27Z,30Z,33Z)-hexatriacontapentaenoyl-CoA + CO2 + CoA</text>
        <dbReference type="Rhea" id="RHEA:36871"/>
        <dbReference type="ChEBI" id="CHEBI:15378"/>
        <dbReference type="ChEBI" id="CHEBI:16526"/>
        <dbReference type="ChEBI" id="CHEBI:57287"/>
        <dbReference type="ChEBI" id="CHEBI:57384"/>
        <dbReference type="ChEBI" id="CHEBI:74260"/>
        <dbReference type="ChEBI" id="CHEBI:74261"/>
    </reaction>
    <physiologicalReaction direction="left-to-right" evidence="1">
        <dbReference type="Rhea" id="RHEA:36872"/>
    </physiologicalReaction>
</comment>
<comment type="catalytic activity">
    <reaction evidence="1">
        <text>(4Z,7Z,10Z,13Z,16Z,19Z)-docosahexaenoyl-CoA + malonyl-CoA + H(+) = 3-oxo-(6Z,9Z,12Z,15Z,18Z,21Z)-tetracosahexaenoyl-CoA + CO2 + CoA</text>
        <dbReference type="Rhea" id="RHEA:36943"/>
        <dbReference type="ChEBI" id="CHEBI:15378"/>
        <dbReference type="ChEBI" id="CHEBI:16526"/>
        <dbReference type="ChEBI" id="CHEBI:57287"/>
        <dbReference type="ChEBI" id="CHEBI:57384"/>
        <dbReference type="ChEBI" id="CHEBI:74298"/>
        <dbReference type="ChEBI" id="CHEBI:74304"/>
    </reaction>
    <physiologicalReaction direction="left-to-right" evidence="1">
        <dbReference type="Rhea" id="RHEA:36944"/>
    </physiologicalReaction>
</comment>
<comment type="catalytic activity">
    <reaction evidence="1">
        <text>(7Z,10Z,13Z,16Z)-docosatetraenoyl-CoA + malonyl-CoA + H(+) = (9Z,12Z,15Z,18Z)-3-oxotetracosatetraenoyl-CoA + CO2 + CoA</text>
        <dbReference type="Rhea" id="RHEA:36479"/>
        <dbReference type="ChEBI" id="CHEBI:15378"/>
        <dbReference type="ChEBI" id="CHEBI:16526"/>
        <dbReference type="ChEBI" id="CHEBI:57287"/>
        <dbReference type="ChEBI" id="CHEBI:57384"/>
        <dbReference type="ChEBI" id="CHEBI:73856"/>
        <dbReference type="ChEBI" id="CHEBI:73857"/>
    </reaction>
    <physiologicalReaction direction="left-to-right" evidence="1">
        <dbReference type="Rhea" id="RHEA:36480"/>
    </physiologicalReaction>
</comment>
<comment type="catalytic activity">
    <reaction evidence="1">
        <text>(11Z,14Z,17Z,20Z,23Z)-hexacosapentaenoyl-CoA + malonyl-CoA + H(+) = 3-oxo-(13Z,16Z,19Z,22Z,25Z)-octacosapentaenoyl-CoA + CO2 + CoA</text>
        <dbReference type="Rhea" id="RHEA:36819"/>
        <dbReference type="ChEBI" id="CHEBI:15378"/>
        <dbReference type="ChEBI" id="CHEBI:16526"/>
        <dbReference type="ChEBI" id="CHEBI:57287"/>
        <dbReference type="ChEBI" id="CHEBI:57384"/>
        <dbReference type="ChEBI" id="CHEBI:74229"/>
        <dbReference type="ChEBI" id="CHEBI:74230"/>
    </reaction>
    <physiologicalReaction direction="left-to-right" evidence="1">
        <dbReference type="Rhea" id="RHEA:36820"/>
    </physiologicalReaction>
</comment>
<comment type="catalytic activity">
    <reaction evidence="1">
        <text>(13Z,16Z,19Z,22Z,25Z)-octacosapentaenoyl-CoA + malonyl-CoA + H(+) = 3-oxo-(15Z,18Z,21Z,24Z,27Z)-triacontapentaenoyl-CoA + CO2 + CoA</text>
        <dbReference type="Rhea" id="RHEA:36843"/>
        <dbReference type="ChEBI" id="CHEBI:15378"/>
        <dbReference type="ChEBI" id="CHEBI:16526"/>
        <dbReference type="ChEBI" id="CHEBI:57287"/>
        <dbReference type="ChEBI" id="CHEBI:57384"/>
        <dbReference type="ChEBI" id="CHEBI:74233"/>
        <dbReference type="ChEBI" id="CHEBI:74246"/>
    </reaction>
    <physiologicalReaction direction="left-to-right" evidence="1">
        <dbReference type="Rhea" id="RHEA:36844"/>
    </physiologicalReaction>
</comment>
<comment type="catalytic activity">
    <reaction evidence="14">
        <text>(15Z,18Z,21Z,24Z,27Z)-triacontapentaenoyl-CoA + malonyl-CoA + H(+) = 3-oxo-(17Z,20Z,23Z,26Z,29Z)-dotriacontapentaenoyl-CoA + CO2 + CoA</text>
        <dbReference type="Rhea" id="RHEA:36851"/>
        <dbReference type="ChEBI" id="CHEBI:15378"/>
        <dbReference type="ChEBI" id="CHEBI:16526"/>
        <dbReference type="ChEBI" id="CHEBI:57287"/>
        <dbReference type="ChEBI" id="CHEBI:57384"/>
        <dbReference type="ChEBI" id="CHEBI:74247"/>
        <dbReference type="ChEBI" id="CHEBI:74254"/>
    </reaction>
    <physiologicalReaction direction="left-to-right" evidence="14">
        <dbReference type="Rhea" id="RHEA:36852"/>
    </physiologicalReaction>
</comment>
<comment type="catalytic activity">
    <reaction evidence="1">
        <text>(17Z,20Z,23Z,26Z,29Z)-dotriacontapentaenoyl-CoA + malonyl-CoA + H(+) = 3-oxo-(19Z,22Z,25Z,28Z,31Z)-tetratriacontapentaenoyl-CoA + CO2 + CoA</text>
        <dbReference type="Rhea" id="RHEA:36859"/>
        <dbReference type="ChEBI" id="CHEBI:15378"/>
        <dbReference type="ChEBI" id="CHEBI:16526"/>
        <dbReference type="ChEBI" id="CHEBI:57287"/>
        <dbReference type="ChEBI" id="CHEBI:57384"/>
        <dbReference type="ChEBI" id="CHEBI:74249"/>
        <dbReference type="ChEBI" id="CHEBI:74259"/>
    </reaction>
    <physiologicalReaction direction="left-to-right" evidence="1">
        <dbReference type="Rhea" id="RHEA:36860"/>
    </physiologicalReaction>
</comment>
<comment type="catalytic activity">
    <reaction evidence="1">
        <text>(21Z,24Z,27Z,30Z,33Z)-hexatriacontapentaenoyl-CoA + malonyl-CoA + H(+) = 3-oxo-(23Z,26Z,29Z,32Z,35Z)-octatriacontapentaenoyl-CoA + CO2 + CoA</text>
        <dbReference type="Rhea" id="RHEA:36875"/>
        <dbReference type="ChEBI" id="CHEBI:15378"/>
        <dbReference type="ChEBI" id="CHEBI:16526"/>
        <dbReference type="ChEBI" id="CHEBI:57287"/>
        <dbReference type="ChEBI" id="CHEBI:57384"/>
        <dbReference type="ChEBI" id="CHEBI:74262"/>
        <dbReference type="ChEBI" id="CHEBI:74263"/>
    </reaction>
    <physiologicalReaction direction="left-to-right" evidence="1">
        <dbReference type="Rhea" id="RHEA:36876"/>
    </physiologicalReaction>
</comment>
<comment type="catalytic activity">
    <reaction evidence="1">
        <text>(11Z,14Z,17Z,20Z)-hexacosatetraenoyl-CoA + malonyl-CoA + H(+) = (13Z,16Z,19Z,22Z)-3-oxooctacosatetraenoyl-CoA + CO2 + CoA</text>
        <dbReference type="Rhea" id="RHEA:36907"/>
        <dbReference type="ChEBI" id="CHEBI:15378"/>
        <dbReference type="ChEBI" id="CHEBI:16526"/>
        <dbReference type="ChEBI" id="CHEBI:57287"/>
        <dbReference type="ChEBI" id="CHEBI:57384"/>
        <dbReference type="ChEBI" id="CHEBI:74282"/>
        <dbReference type="ChEBI" id="CHEBI:74283"/>
    </reaction>
    <physiologicalReaction direction="left-to-right" evidence="1">
        <dbReference type="Rhea" id="RHEA:36908"/>
    </physiologicalReaction>
</comment>
<comment type="catalytic activity">
    <reaction evidence="1">
        <text>(13Z,16Z,19Z,22Z)-octacosatetraenoyl-CoA + malonyl-CoA + H(+) = 3-oxo-(15Z,18Z,21Z,24Z)-triacontatetraenoyl-CoA + CO2 + CoA</text>
        <dbReference type="Rhea" id="RHEA:36911"/>
        <dbReference type="ChEBI" id="CHEBI:15378"/>
        <dbReference type="ChEBI" id="CHEBI:16526"/>
        <dbReference type="ChEBI" id="CHEBI:57287"/>
        <dbReference type="ChEBI" id="CHEBI:57384"/>
        <dbReference type="ChEBI" id="CHEBI:74285"/>
        <dbReference type="ChEBI" id="CHEBI:74286"/>
    </reaction>
    <physiologicalReaction direction="left-to-right" evidence="1">
        <dbReference type="Rhea" id="RHEA:36912"/>
    </physiologicalReaction>
</comment>
<comment type="catalytic activity">
    <reaction evidence="14">
        <text>(15Z,18Z,21Z,24Z)-triacontatetraenoyl-CoA + malonyl-CoA + H(+) = 3-oxo-(17Z,20Z,23Z,26Z)-dotriacontatetraenoyl-CoA + CO2 + CoA</text>
        <dbReference type="Rhea" id="RHEA:36915"/>
        <dbReference type="ChEBI" id="CHEBI:15378"/>
        <dbReference type="ChEBI" id="CHEBI:16526"/>
        <dbReference type="ChEBI" id="CHEBI:57287"/>
        <dbReference type="ChEBI" id="CHEBI:57384"/>
        <dbReference type="ChEBI" id="CHEBI:74287"/>
        <dbReference type="ChEBI" id="CHEBI:74288"/>
    </reaction>
    <physiologicalReaction direction="left-to-right" evidence="14">
        <dbReference type="Rhea" id="RHEA:36916"/>
    </physiologicalReaction>
</comment>
<comment type="catalytic activity">
    <reaction evidence="1">
        <text>(17Z,20Z,23Z,26Z)-dotriacontatetraenoyl-CoA + malonyl-CoA + H(+) = 3-oxo-(19Z,22Z,25Z,28Z)-tetratriacontatetraenoyl-CoA + CO2 + CoA</text>
        <dbReference type="Rhea" id="RHEA:36919"/>
        <dbReference type="ChEBI" id="CHEBI:15378"/>
        <dbReference type="ChEBI" id="CHEBI:16526"/>
        <dbReference type="ChEBI" id="CHEBI:57287"/>
        <dbReference type="ChEBI" id="CHEBI:57384"/>
        <dbReference type="ChEBI" id="CHEBI:74289"/>
        <dbReference type="ChEBI" id="CHEBI:74290"/>
    </reaction>
    <physiologicalReaction direction="left-to-right" evidence="1">
        <dbReference type="Rhea" id="RHEA:36920"/>
    </physiologicalReaction>
</comment>
<comment type="catalytic activity">
    <reaction evidence="1">
        <text>(19Z,22Z,25Z,28Z)-tetratriacontatetraenoyl-CoA + malonyl-CoA + H(+) = 3-oxo-(21Z,24Z,27Z,30Z)-hexatriacontatetraenoyl-CoA + CO2 + CoA</text>
        <dbReference type="Rhea" id="RHEA:36923"/>
        <dbReference type="ChEBI" id="CHEBI:15378"/>
        <dbReference type="ChEBI" id="CHEBI:16526"/>
        <dbReference type="ChEBI" id="CHEBI:57287"/>
        <dbReference type="ChEBI" id="CHEBI:57384"/>
        <dbReference type="ChEBI" id="CHEBI:74291"/>
        <dbReference type="ChEBI" id="CHEBI:74292"/>
    </reaction>
    <physiologicalReaction direction="left-to-right" evidence="1">
        <dbReference type="Rhea" id="RHEA:36924"/>
    </physiologicalReaction>
</comment>
<comment type="catalytic activity">
    <reaction evidence="1">
        <text>(21Z,24Z,27Z,30Z)-hexatriacontatetraenoyl-CoA + malonyl-CoA + H(+) = 3-oxo-(23Z,26Z,29Z,32Z)-octatriacontatetraenoyl-CoA + CO2 + CoA</text>
        <dbReference type="Rhea" id="RHEA:36927"/>
        <dbReference type="ChEBI" id="CHEBI:15378"/>
        <dbReference type="ChEBI" id="CHEBI:16526"/>
        <dbReference type="ChEBI" id="CHEBI:57287"/>
        <dbReference type="ChEBI" id="CHEBI:57384"/>
        <dbReference type="ChEBI" id="CHEBI:74293"/>
        <dbReference type="ChEBI" id="CHEBI:74294"/>
    </reaction>
    <physiologicalReaction direction="left-to-right" evidence="1">
        <dbReference type="Rhea" id="RHEA:36928"/>
    </physiologicalReaction>
</comment>
<comment type="catalytic activity">
    <reaction evidence="1">
        <text>(6Z,9Z,12Z,15Z,18Z,21Z)-tetracosahexaenoyl-CoA + malonyl-CoA + H(+) = 3-oxo-(8Z,11Z,14Z,17Z,20Z,23Z)-hexacosahexaenoyl-CoA + CO2 + CoA</text>
        <dbReference type="Rhea" id="RHEA:36947"/>
        <dbReference type="ChEBI" id="CHEBI:15378"/>
        <dbReference type="ChEBI" id="CHEBI:16526"/>
        <dbReference type="ChEBI" id="CHEBI:57287"/>
        <dbReference type="ChEBI" id="CHEBI:57384"/>
        <dbReference type="ChEBI" id="CHEBI:74086"/>
        <dbReference type="ChEBI" id="CHEBI:74305"/>
    </reaction>
    <physiologicalReaction direction="left-to-right" evidence="1">
        <dbReference type="Rhea" id="RHEA:36948"/>
    </physiologicalReaction>
</comment>
<comment type="catalytic activity">
    <reaction evidence="1">
        <text>(8Z,11Z,14Z,17Z,20Z,23Z)-hexacosahexaenoyl-CoA + malonyl-CoA + H(+) = 3-oxo-(10Z,13Z,16Z,19Z,22Z,25Z)-octacosahexaenoyl-CoA + CO2 + CoA</text>
        <dbReference type="Rhea" id="RHEA:36963"/>
        <dbReference type="ChEBI" id="CHEBI:15378"/>
        <dbReference type="ChEBI" id="CHEBI:16526"/>
        <dbReference type="ChEBI" id="CHEBI:57287"/>
        <dbReference type="ChEBI" id="CHEBI:57384"/>
        <dbReference type="ChEBI" id="CHEBI:74306"/>
        <dbReference type="ChEBI" id="CHEBI:74311"/>
    </reaction>
    <physiologicalReaction direction="left-to-right" evidence="1">
        <dbReference type="Rhea" id="RHEA:36964"/>
    </physiologicalReaction>
</comment>
<comment type="catalytic activity">
    <reaction evidence="1">
        <text>(10Z,13Z,16Z,19Z,22Z,25Z)-octacosahexaenoyl-CoA + malonyl-CoA + H(+) = 3-oxo-(12Z,15Z,18Z,21Z,24Z,27Z)-triacontahexaenoyl-CoA + CO2 + CoA</text>
        <dbReference type="Rhea" id="RHEA:36967"/>
        <dbReference type="ChEBI" id="CHEBI:15378"/>
        <dbReference type="ChEBI" id="CHEBI:16526"/>
        <dbReference type="ChEBI" id="CHEBI:57287"/>
        <dbReference type="ChEBI" id="CHEBI:57384"/>
        <dbReference type="ChEBI" id="CHEBI:74312"/>
        <dbReference type="ChEBI" id="CHEBI:74313"/>
    </reaction>
    <physiologicalReaction direction="left-to-right" evidence="1">
        <dbReference type="Rhea" id="RHEA:36968"/>
    </physiologicalReaction>
</comment>
<comment type="catalytic activity">
    <reaction evidence="14">
        <text>(12Z,15Z,18Z,21Z,24Z,27Z)-triacontahexaenoyl-CoA + malonyl-CoA + H(+) = 3-oxo-(14Z,17Z,20Z,23Z,26Z,29Z)-dotriacontahexaenoyl-CoA + CO2 + CoA</text>
        <dbReference type="Rhea" id="RHEA:36979"/>
        <dbReference type="ChEBI" id="CHEBI:15378"/>
        <dbReference type="ChEBI" id="CHEBI:16526"/>
        <dbReference type="ChEBI" id="CHEBI:57287"/>
        <dbReference type="ChEBI" id="CHEBI:57384"/>
        <dbReference type="ChEBI" id="CHEBI:74315"/>
        <dbReference type="ChEBI" id="CHEBI:74316"/>
    </reaction>
    <physiologicalReaction direction="left-to-right" evidence="14">
        <dbReference type="Rhea" id="RHEA:36980"/>
    </physiologicalReaction>
</comment>
<comment type="catalytic activity">
    <reaction evidence="14">
        <text>(14Z,17Z,20Z,23Z,26Z,29Z)-dotriacontahexaenoyl-CoA + malonyl-CoA + H(+) = 3-oxo-(16Z,19Z,22Z,25Z,28Z,31Z)-tetratriacontahexaenoyl-CoA + CO2 + CoA</text>
        <dbReference type="Rhea" id="RHEA:36983"/>
        <dbReference type="ChEBI" id="CHEBI:15378"/>
        <dbReference type="ChEBI" id="CHEBI:16526"/>
        <dbReference type="ChEBI" id="CHEBI:57287"/>
        <dbReference type="ChEBI" id="CHEBI:57384"/>
        <dbReference type="ChEBI" id="CHEBI:74317"/>
        <dbReference type="ChEBI" id="CHEBI:74318"/>
    </reaction>
    <physiologicalReaction direction="left-to-right" evidence="14">
        <dbReference type="Rhea" id="RHEA:36984"/>
    </physiologicalReaction>
</comment>
<comment type="catalytic activity">
    <reaction evidence="1">
        <text>(16Z,19Z,22Z,25Z,28Z,31Z)-tetratriacontahexaenoyl-CoA + malonyl-CoA + H(+) = 3-oxo-(18Z,21Z,24Z,27Z,30Z,33Z)-hexatriacontahexaenoyl-CoA + CO2 + CoA</text>
        <dbReference type="Rhea" id="RHEA:36995"/>
        <dbReference type="ChEBI" id="CHEBI:15378"/>
        <dbReference type="ChEBI" id="CHEBI:16526"/>
        <dbReference type="ChEBI" id="CHEBI:57287"/>
        <dbReference type="ChEBI" id="CHEBI:57384"/>
        <dbReference type="ChEBI" id="CHEBI:74319"/>
        <dbReference type="ChEBI" id="CHEBI:74320"/>
    </reaction>
    <physiologicalReaction direction="left-to-right" evidence="1">
        <dbReference type="Rhea" id="RHEA:36996"/>
    </physiologicalReaction>
</comment>
<comment type="catalytic activity">
    <reaction evidence="1">
        <text>(9Z,12Z,15Z,18Z,21Z)-tetracosapentaenoyl-CoA + malonyl-CoA + H(+) = 3-oxo-(11Z,14Z,17Z,20Z,23Z)-hexacosapentaenoyl-CoA + CO2 + CoA</text>
        <dbReference type="Rhea" id="RHEA:37243"/>
        <dbReference type="ChEBI" id="CHEBI:15378"/>
        <dbReference type="ChEBI" id="CHEBI:16526"/>
        <dbReference type="ChEBI" id="CHEBI:57287"/>
        <dbReference type="ChEBI" id="CHEBI:57384"/>
        <dbReference type="ChEBI" id="CHEBI:74083"/>
        <dbReference type="ChEBI" id="CHEBI:74663"/>
    </reaction>
    <physiologicalReaction direction="left-to-right" evidence="1">
        <dbReference type="Rhea" id="RHEA:37244"/>
    </physiologicalReaction>
</comment>
<comment type="pathway">
    <text evidence="2 8 10">Lipid metabolism; fatty acid biosynthesis.</text>
</comment>
<comment type="subunit">
    <text evidence="2 7">Oligomer.</text>
</comment>
<comment type="interaction">
    <interactant intactId="EBI-18535450">
        <id>Q9GZR5</id>
    </interactant>
    <interactant intactId="EBI-11277970">
        <id>Q9UHX3</id>
        <label>ADGRE2</label>
    </interactant>
    <organismsDiffer>false</organismsDiffer>
    <experiments>3</experiments>
</comment>
<comment type="interaction">
    <interactant intactId="EBI-18535450">
        <id>Q9GZR5</id>
    </interactant>
    <interactant intactId="EBI-12109402">
        <id>Q86W74-2</id>
        <label>ANKRD46</label>
    </interactant>
    <organismsDiffer>false</organismsDiffer>
    <experiments>3</experiments>
</comment>
<comment type="interaction">
    <interactant intactId="EBI-18535450">
        <id>Q9GZR5</id>
    </interactant>
    <interactant intactId="EBI-11976321">
        <id>O95236-2</id>
        <label>APOL3</label>
    </interactant>
    <organismsDiffer>false</organismsDiffer>
    <experiments>3</experiments>
</comment>
<comment type="interaction">
    <interactant intactId="EBI-18535450">
        <id>Q9GZR5</id>
    </interactant>
    <interactant intactId="EBI-12069500">
        <id>Q9HD20-3</id>
        <label>ATP13A1</label>
    </interactant>
    <organismsDiffer>false</organismsDiffer>
    <experiments>3</experiments>
</comment>
<comment type="interaction">
    <interactant intactId="EBI-18535450">
        <id>Q9GZR5</id>
    </interactant>
    <interactant intactId="EBI-78035">
        <id>Q07817</id>
        <label>BCL2L1</label>
    </interactant>
    <organismsDiffer>false</organismsDiffer>
    <experiments>3</experiments>
</comment>
<comment type="interaction">
    <interactant intactId="EBI-18535450">
        <id>Q9GZR5</id>
    </interactant>
    <interactant intactId="EBI-749204">
        <id>O15155</id>
        <label>BET1</label>
    </interactant>
    <organismsDiffer>false</organismsDiffer>
    <experiments>3</experiments>
</comment>
<comment type="interaction">
    <interactant intactId="EBI-18535450">
        <id>Q9GZR5</id>
    </interactant>
    <interactant intactId="EBI-700794">
        <id>Q13323</id>
        <label>BIK</label>
    </interactant>
    <organismsDiffer>false</organismsDiffer>
    <experiments>3</experiments>
</comment>
<comment type="interaction">
    <interactant intactId="EBI-18535450">
        <id>Q9GZR5</id>
    </interactant>
    <interactant intactId="EBI-4402847">
        <id>Q12981</id>
        <label>BNIP1</label>
    </interactant>
    <organismsDiffer>false</organismsDiffer>
    <experiments>3</experiments>
</comment>
<comment type="interaction">
    <interactant intactId="EBI-18535450">
        <id>Q9GZR5</id>
    </interactant>
    <interactant intactId="EBI-749464">
        <id>Q12983</id>
        <label>BNIP3</label>
    </interactant>
    <organismsDiffer>false</organismsDiffer>
    <experiments>3</experiments>
</comment>
<comment type="interaction">
    <interactant intactId="EBI-18535450">
        <id>Q9GZR5</id>
    </interactant>
    <interactant intactId="EBI-8648738">
        <id>Q8WVV5</id>
        <label>BTN2A2</label>
    </interactant>
    <organismsDiffer>false</organismsDiffer>
    <experiments>3</experiments>
</comment>
<comment type="interaction">
    <interactant intactId="EBI-18535450">
        <id>Q9GZR5</id>
    </interactant>
    <interactant intactId="EBI-9083477">
        <id>Q9P0B6</id>
        <label>CCDC167</label>
    </interactant>
    <organismsDiffer>false</organismsDiffer>
    <experiments>3</experiments>
</comment>
<comment type="interaction">
    <interactant intactId="EBI-18535450">
        <id>Q9GZR5</id>
    </interactant>
    <interactant intactId="EBI-10271156">
        <id>Q8NHW4</id>
        <label>CCL4L2</label>
    </interactant>
    <organismsDiffer>false</organismsDiffer>
    <experiments>3</experiments>
</comment>
<comment type="interaction">
    <interactant intactId="EBI-18535450">
        <id>Q9GZR5</id>
    </interactant>
    <interactant intactId="EBI-18539709">
        <id>P32970</id>
        <label>CD70</label>
    </interactant>
    <organismsDiffer>false</organismsDiffer>
    <experiments>3</experiments>
</comment>
<comment type="interaction">
    <interactant intactId="EBI-18535450">
        <id>Q9GZR5</id>
    </interactant>
    <interactant intactId="EBI-11959453">
        <id>Q8NHS1</id>
        <label>CLDND2</label>
    </interactant>
    <organismsDiffer>false</organismsDiffer>
    <experiments>3</experiments>
</comment>
<comment type="interaction">
    <interactant intactId="EBI-18535450">
        <id>Q9GZR5</id>
    </interactant>
    <interactant intactId="EBI-7247651">
        <id>Q96MX0</id>
        <label>CMTM3</label>
    </interactant>
    <organismsDiffer>false</organismsDiffer>
    <experiments>3</experiments>
</comment>
<comment type="interaction">
    <interactant intactId="EBI-18535450">
        <id>Q9GZR5</id>
    </interactant>
    <interactant intactId="EBI-11522780">
        <id>Q96DZ9-2</id>
        <label>CMTM5</label>
    </interactant>
    <organismsDiffer>false</organismsDiffer>
    <experiments>3</experiments>
</comment>
<comment type="interaction">
    <interactant intactId="EBI-18535450">
        <id>Q9GZR5</id>
    </interactant>
    <interactant intactId="EBI-2807956">
        <id>Q96FZ5</id>
        <label>CMTM7</label>
    </interactant>
    <organismsDiffer>false</organismsDiffer>
    <experiments>3</experiments>
</comment>
<comment type="interaction">
    <interactant intactId="EBI-18535450">
        <id>Q9GZR5</id>
    </interactant>
    <interactant intactId="EBI-12211159">
        <id>P29400-2</id>
        <label>COL4A5</label>
    </interactant>
    <organismsDiffer>false</organismsDiffer>
    <experiments>3</experiments>
</comment>
<comment type="interaction">
    <interactant intactId="EBI-18535450">
        <id>Q9GZR5</id>
    </interactant>
    <interactant intactId="EBI-1046040">
        <id>P00387</id>
        <label>CYB5R3</label>
    </interactant>
    <organismsDiffer>false</organismsDiffer>
    <experiments>3</experiments>
</comment>
<comment type="interaction">
    <interactant intactId="EBI-18535450">
        <id>Q9GZR5</id>
    </interactant>
    <interactant intactId="EBI-1752413">
        <id>P78329</id>
        <label>CYP4F2</label>
    </interactant>
    <organismsDiffer>false</organismsDiffer>
    <experiments>3</experiments>
</comment>
<comment type="interaction">
    <interactant intactId="EBI-18535450">
        <id>Q9GZR5</id>
    </interactant>
    <interactant intactId="EBI-711490">
        <id>Q9UKR5</id>
        <label>ERG28</label>
    </interactant>
    <organismsDiffer>false</organismsDiffer>
    <experiments>3</experiments>
</comment>
<comment type="interaction">
    <interactant intactId="EBI-18535450">
        <id>Q9GZR5</id>
    </interactant>
    <interactant intactId="EBI-11337888">
        <id>Q7L5A8</id>
        <label>FA2H</label>
    </interactant>
    <organismsDiffer>false</organismsDiffer>
    <experiments>3</experiments>
</comment>
<comment type="interaction">
    <interactant intactId="EBI-18535450">
        <id>Q9GZR5</id>
    </interactant>
    <interactant intactId="EBI-12201693">
        <id>Q8N128-2</id>
        <label>FAM177A1</label>
    </interactant>
    <organismsDiffer>false</organismsDiffer>
    <experiments>3</experiments>
</comment>
<comment type="interaction">
    <interactant intactId="EBI-18535450">
        <id>Q9GZR5</id>
    </interactant>
    <interactant intactId="EBI-2876774">
        <id>Q92520</id>
        <label>FAM3C</label>
    </interactant>
    <organismsDiffer>false</organismsDiffer>
    <experiments>3</experiments>
</comment>
<comment type="interaction">
    <interactant intactId="EBI-18535450">
        <id>Q9GZR5</id>
    </interactant>
    <interactant intactId="EBI-12142299">
        <id>Q96IV6</id>
        <label>FAXDC2</label>
    </interactant>
    <organismsDiffer>false</organismsDiffer>
    <experiments>3</experiments>
</comment>
<comment type="interaction">
    <interactant intactId="EBI-18535450">
        <id>Q9GZR5</id>
    </interactant>
    <interactant intactId="EBI-714550">
        <id>P37268</id>
        <label>FDFT1</label>
    </interactant>
    <organismsDiffer>false</organismsDiffer>
    <experiments>3</experiments>
</comment>
<comment type="interaction">
    <interactant intactId="EBI-18535450">
        <id>Q9GZR5</id>
    </interactant>
    <interactant intactId="EBI-724839">
        <id>Q14318</id>
        <label>FKBP8</label>
    </interactant>
    <organismsDiffer>false</organismsDiffer>
    <experiments>3</experiments>
</comment>
<comment type="interaction">
    <interactant intactId="EBI-18535450">
        <id>Q9GZR5</id>
    </interactant>
    <interactant intactId="EBI-713304">
        <id>Q9H0Q3</id>
        <label>FXYD6</label>
    </interactant>
    <organismsDiffer>false</organismsDiffer>
    <experiments>3</experiments>
</comment>
<comment type="interaction">
    <interactant intactId="EBI-18535450">
        <id>Q9GZR5</id>
    </interactant>
    <interactant intactId="EBI-11991950">
        <id>Q8WWP7</id>
        <label>GIMAP1</label>
    </interactant>
    <organismsDiffer>false</organismsDiffer>
    <experiments>3</experiments>
</comment>
<comment type="interaction">
    <interactant intactId="EBI-18535450">
        <id>Q9GZR5</id>
    </interactant>
    <interactant intactId="EBI-6166686">
        <id>Q96F15</id>
        <label>GIMAP5</label>
    </interactant>
    <organismsDiffer>false</organismsDiffer>
    <experiments>3</experiments>
</comment>
<comment type="interaction">
    <interactant intactId="EBI-18535450">
        <id>Q9GZR5</id>
    </interactant>
    <interactant intactId="EBI-4401517">
        <id>O14653</id>
        <label>GOSR2</label>
    </interactant>
    <organismsDiffer>false</organismsDiffer>
    <experiments>3</experiments>
</comment>
<comment type="interaction">
    <interactant intactId="EBI-18535450">
        <id>Q9GZR5</id>
    </interactant>
    <interactant intactId="EBI-2927498">
        <id>O60883</id>
        <label>GPR37L1</label>
    </interactant>
    <organismsDiffer>false</organismsDiffer>
    <experiments>3</experiments>
</comment>
<comment type="interaction">
    <interactant intactId="EBI-18535450">
        <id>Q9GZR5</id>
    </interactant>
    <interactant intactId="EBI-702665">
        <id>P02724</id>
        <label>GYPA</label>
    </interactant>
    <organismsDiffer>false</organismsDiffer>
    <experiments>3</experiments>
</comment>
<comment type="interaction">
    <interactant intactId="EBI-18535450">
        <id>Q9GZR5</id>
    </interactant>
    <interactant intactId="EBI-2806151">
        <id>P09601</id>
        <label>HMOX1</label>
    </interactant>
    <organismsDiffer>false</organismsDiffer>
    <experiments>3</experiments>
</comment>
<comment type="interaction">
    <interactant intactId="EBI-18535450">
        <id>Q9GZR5</id>
    </interactant>
    <interactant intactId="EBI-712096">
        <id>P30519</id>
        <label>HMOX2</label>
    </interactant>
    <organismsDiffer>false</organismsDiffer>
    <experiments>3</experiments>
</comment>
<comment type="interaction">
    <interactant intactId="EBI-18535450">
        <id>Q9GZR5</id>
    </interactant>
    <interactant intactId="EBI-3918847">
        <id>Q9H2F3</id>
        <label>HSD3B7</label>
    </interactant>
    <organismsDiffer>false</organismsDiffer>
    <experiments>3</experiments>
</comment>
<comment type="interaction">
    <interactant intactId="EBI-18535450">
        <id>Q9GZR5</id>
    </interactant>
    <interactant intactId="EBI-725665">
        <id>Q9Y5U9</id>
        <label>IER3IP1</label>
    </interactant>
    <organismsDiffer>false</organismsDiffer>
    <experiments>3</experiments>
</comment>
<comment type="interaction">
    <interactant intactId="EBI-18535450">
        <id>Q9GZR5</id>
    </interactant>
    <interactant intactId="EBI-2568251">
        <id>P11215</id>
        <label>ITGAM</label>
    </interactant>
    <organismsDiffer>false</organismsDiffer>
    <experiments>3</experiments>
</comment>
<comment type="interaction">
    <interactant intactId="EBI-18535450">
        <id>Q9GZR5</id>
    </interactant>
    <interactant intactId="EBI-10266796">
        <id>Q8N5M9</id>
        <label>JAGN1</label>
    </interactant>
    <organismsDiffer>false</organismsDiffer>
    <experiments>3</experiments>
</comment>
<comment type="interaction">
    <interactant intactId="EBI-18535450">
        <id>Q9GZR5</id>
    </interactant>
    <interactant intactId="EBI-750776">
        <id>O95214</id>
        <label>LEPROTL1</label>
    </interactant>
    <organismsDiffer>false</organismsDiffer>
    <experiments>3</experiments>
</comment>
<comment type="interaction">
    <interactant intactId="EBI-18535450">
        <id>Q9GZR5</id>
    </interactant>
    <interactant intactId="EBI-2820517">
        <id>Q8TAF8</id>
        <label>LHFPL5</label>
    </interactant>
    <organismsDiffer>false</organismsDiffer>
    <experiments>3</experiments>
</comment>
<comment type="interaction">
    <interactant intactId="EBI-18535450">
        <id>Q9GZR5</id>
    </interactant>
    <interactant intactId="EBI-1965225">
        <id>Q14210</id>
        <label>LY6D</label>
    </interactant>
    <organismsDiffer>false</organismsDiffer>
    <experiments>3</experiments>
</comment>
<comment type="interaction">
    <interactant intactId="EBI-18535450">
        <id>Q9GZR5</id>
    </interactant>
    <interactant intactId="EBI-750078">
        <id>Q13021</id>
        <label>MALL</label>
    </interactant>
    <organismsDiffer>false</organismsDiffer>
    <experiments>3</experiments>
</comment>
<comment type="interaction">
    <interactant intactId="EBI-18535450">
        <id>Q9GZR5</id>
    </interactant>
    <interactant intactId="EBI-992788">
        <id>P50281</id>
        <label>MMP14</label>
    </interactant>
    <organismsDiffer>false</organismsDiffer>
    <experiments>3</experiments>
</comment>
<comment type="interaction">
    <interactant intactId="EBI-18535450">
        <id>Q9GZR5</id>
    </interactant>
    <interactant intactId="EBI-10317425">
        <id>Q9NZG7</id>
        <label>NINJ2</label>
    </interactant>
    <organismsDiffer>false</organismsDiffer>
    <experiments>3</experiments>
</comment>
<comment type="interaction">
    <interactant intactId="EBI-18535450">
        <id>Q9GZR5</id>
    </interactant>
    <interactant intactId="EBI-11075081">
        <id>Q53FV1</id>
        <label>ORMDL2</label>
    </interactant>
    <organismsDiffer>false</organismsDiffer>
    <experiments>3</experiments>
</comment>
<comment type="interaction">
    <interactant intactId="EBI-18535450">
        <id>Q9GZR5</id>
    </interactant>
    <interactant intactId="EBI-721750">
        <id>Q8N138</id>
        <label>ORMDL3</label>
    </interactant>
    <organismsDiffer>false</organismsDiffer>
    <experiments>3</experiments>
</comment>
<comment type="interaction">
    <interactant intactId="EBI-18535450">
        <id>Q9GZR5</id>
    </interactant>
    <interactant intactId="EBI-12257782">
        <id>Q99640-2</id>
        <label>PKMYT1</label>
    </interactant>
    <organismsDiffer>false</organismsDiffer>
    <experiments>3</experiments>
</comment>
<comment type="interaction">
    <interactant intactId="EBI-18535450">
        <id>Q9GZR5</id>
    </interactant>
    <interactant intactId="EBI-3919291">
        <id>Q9Y342</id>
        <label>PLLP</label>
    </interactant>
    <organismsDiffer>false</organismsDiffer>
    <experiments>3</experiments>
</comment>
<comment type="interaction">
    <interactant intactId="EBI-18535450">
        <id>Q9GZR5</id>
    </interactant>
    <interactant intactId="EBI-692836">
        <id>P26678</id>
        <label>PLN</label>
    </interactant>
    <organismsDiffer>false</organismsDiffer>
    <experiments>3</experiments>
</comment>
<comment type="interaction">
    <interactant intactId="EBI-18535450">
        <id>Q9GZR5</id>
    </interactant>
    <interactant intactId="EBI-12188331">
        <id>P60201-2</id>
        <label>PLP1</label>
    </interactant>
    <organismsDiffer>false</organismsDiffer>
    <experiments>3</experiments>
</comment>
<comment type="interaction">
    <interactant intactId="EBI-18535450">
        <id>Q9GZR5</id>
    </interactant>
    <interactant intactId="EBI-968788">
        <id>P18031</id>
        <label>PTPN1</label>
    </interactant>
    <organismsDiffer>false</organismsDiffer>
    <experiments>3</experiments>
</comment>
<comment type="interaction">
    <interactant intactId="EBI-18535450">
        <id>Q9GZR5</id>
    </interactant>
    <interactant intactId="EBI-722247">
        <id>Q9NP72</id>
        <label>RAB18</label>
    </interactant>
    <organismsDiffer>false</organismsDiffer>
    <experiments>3</experiments>
</comment>
<comment type="interaction">
    <interactant intactId="EBI-18535450">
        <id>Q9GZR5</id>
    </interactant>
    <interactant intactId="EBI-10244780">
        <id>Q5QGT7</id>
        <label>RTP2</label>
    </interactant>
    <organismsDiffer>false</organismsDiffer>
    <experiments>3</experiments>
</comment>
<comment type="interaction">
    <interactant intactId="EBI-18535450">
        <id>Q9GZR5</id>
    </interactant>
    <interactant intactId="EBI-8652744">
        <id>Q96IW7</id>
        <label>SEC22A</label>
    </interactant>
    <organismsDiffer>false</organismsDiffer>
    <experiments>3</experiments>
</comment>
<comment type="interaction">
    <interactant intactId="EBI-18535450">
        <id>Q9GZR5</id>
    </interactant>
    <interactant intactId="EBI-1058865">
        <id>O75396</id>
        <label>SEC22B</label>
    </interactant>
    <organismsDiffer>false</organismsDiffer>
    <experiments>3</experiments>
</comment>
<comment type="interaction">
    <interactant intactId="EBI-18535450">
        <id>Q9GZR5</id>
    </interactant>
    <interactant intactId="EBI-2115181">
        <id>O75920</id>
        <label>SERF1B</label>
    </interactant>
    <organismsDiffer>false</organismsDiffer>
    <experiments>3</experiments>
</comment>
<comment type="interaction">
    <interactant intactId="EBI-18535450">
        <id>Q9GZR5</id>
    </interactant>
    <interactant intactId="EBI-749270">
        <id>Q8N6R1</id>
        <label>SERP2</label>
    </interactant>
    <organismsDiffer>false</organismsDiffer>
    <experiments>3</experiments>
</comment>
<comment type="interaction">
    <interactant intactId="EBI-18535450">
        <id>Q9GZR5</id>
    </interactant>
    <interactant intactId="EBI-4402330">
        <id>O95562</id>
        <label>SFT2D2</label>
    </interactant>
    <organismsDiffer>false</organismsDiffer>
    <experiments>3</experiments>
</comment>
<comment type="interaction">
    <interactant intactId="EBI-18535450">
        <id>Q9GZR5</id>
    </interactant>
    <interactant intactId="EBI-10294651">
        <id>Q99726</id>
        <label>SLC30A3</label>
    </interactant>
    <organismsDiffer>false</organismsDiffer>
    <experiments>3</experiments>
</comment>
<comment type="interaction">
    <interactant intactId="EBI-18535450">
        <id>Q9GZR5</id>
    </interactant>
    <interactant intactId="EBI-10262251">
        <id>Q8IWU4</id>
        <label>SLC30A8</label>
    </interactant>
    <organismsDiffer>false</organismsDiffer>
    <experiments>3</experiments>
</comment>
<comment type="interaction">
    <interactant intactId="EBI-18535450">
        <id>Q9GZR5</id>
    </interactant>
    <interactant intactId="EBI-11957067">
        <id>Q6UX34</id>
        <label>SNORC</label>
    </interactant>
    <organismsDiffer>false</organismsDiffer>
    <experiments>3</experiments>
</comment>
<comment type="interaction">
    <interactant intactId="EBI-18535450">
        <id>Q9GZR5</id>
    </interactant>
    <interactant intactId="EBI-1394295">
        <id>Q13277</id>
        <label>STX3</label>
    </interactant>
    <organismsDiffer>false</organismsDiffer>
    <experiments>3</experiments>
</comment>
<comment type="interaction">
    <interactant intactId="EBI-18535450">
        <id>Q9GZR5</id>
    </interactant>
    <interactant intactId="EBI-726331">
        <id>Q9H7V2</id>
        <label>SYNDIG1</label>
    </interactant>
    <organismsDiffer>false</organismsDiffer>
    <experiments>3</experiments>
</comment>
<comment type="interaction">
    <interactant intactId="EBI-18535450">
        <id>Q9GZR5</id>
    </interactant>
    <interactant intactId="EBI-2877718">
        <id>Q9NZ01</id>
        <label>TECR</label>
    </interactant>
    <organismsDiffer>false</organismsDiffer>
    <experiments>3</experiments>
</comment>
<comment type="interaction">
    <interactant intactId="EBI-18535450">
        <id>Q9GZR5</id>
    </interactant>
    <interactant intactId="EBI-714319">
        <id>P02787</id>
        <label>TF</label>
    </interactant>
    <organismsDiffer>false</organismsDiffer>
    <experiments>3</experiments>
</comment>
<comment type="interaction">
    <interactant intactId="EBI-18535450">
        <id>Q9GZR5</id>
    </interactant>
    <interactant intactId="EBI-723946">
        <id>P17152</id>
        <label>TMEM11</label>
    </interactant>
    <organismsDiffer>false</organismsDiffer>
    <experiments>3</experiments>
</comment>
<comment type="interaction">
    <interactant intactId="EBI-18535450">
        <id>Q9GZR5</id>
    </interactant>
    <interactant intactId="EBI-10694905">
        <id>Q5BJH2-2</id>
        <label>TMEM128</label>
    </interactant>
    <organismsDiffer>false</organismsDiffer>
    <experiments>3</experiments>
</comment>
<comment type="interaction">
    <interactant intactId="EBI-18535450">
        <id>Q9GZR5</id>
    </interactant>
    <interactant intactId="EBI-741829">
        <id>Q96HH6</id>
        <label>TMEM19</label>
    </interactant>
    <organismsDiffer>false</organismsDiffer>
    <experiments>3</experiments>
</comment>
<comment type="interaction">
    <interactant intactId="EBI-18535450">
        <id>Q9GZR5</id>
    </interactant>
    <interactant intactId="EBI-10265825">
        <id>Q8N511</id>
        <label>TMEM199</label>
    </interactant>
    <organismsDiffer>false</organismsDiffer>
    <experiments>3</experiments>
</comment>
<comment type="interaction">
    <interactant intactId="EBI-18535450">
        <id>Q9GZR5</id>
    </interactant>
    <interactant intactId="EBI-12274070">
        <id>Q969S6</id>
        <label>TMEM203</label>
    </interactant>
    <organismsDiffer>false</organismsDiffer>
    <experiments>3</experiments>
</comment>
<comment type="interaction">
    <interactant intactId="EBI-18535450">
        <id>Q9GZR5</id>
    </interactant>
    <interactant intactId="EBI-10173151">
        <id>A2RU14</id>
        <label>TMEM218</label>
    </interactant>
    <organismsDiffer>false</organismsDiffer>
    <experiments>3</experiments>
</comment>
<comment type="interaction">
    <interactant intactId="EBI-18535450">
        <id>Q9GZR5</id>
    </interactant>
    <interactant intactId="EBI-347385">
        <id>Q9H0R3</id>
        <label>TMEM222</label>
    </interactant>
    <organismsDiffer>false</organismsDiffer>
    <experiments>3</experiments>
</comment>
<comment type="interaction">
    <interactant intactId="EBI-18535450">
        <id>Q9GZR5</id>
    </interactant>
    <interactant intactId="EBI-10315004">
        <id>Q9NWH2</id>
        <label>TMEM242</label>
    </interactant>
    <organismsDiffer>false</organismsDiffer>
    <experiments>3</experiments>
</comment>
<comment type="interaction">
    <interactant intactId="EBI-18535450">
        <id>Q9GZR5</id>
    </interactant>
    <interactant intactId="EBI-12887458">
        <id>Q9BU79</id>
        <label>TMEM243</label>
    </interactant>
    <organismsDiffer>false</organismsDiffer>
    <experiments>3</experiments>
</comment>
<comment type="interaction">
    <interactant intactId="EBI-18535450">
        <id>Q9GZR5</id>
    </interactant>
    <interactant intactId="EBI-11956809">
        <id>Q8TBM7</id>
        <label>TMEM254</label>
    </interactant>
    <organismsDiffer>false</organismsDiffer>
    <experiments>3</experiments>
</comment>
<comment type="interaction">
    <interactant intactId="EBI-18535450">
        <id>Q9GZR5</id>
    </interactant>
    <interactant intactId="EBI-12038591">
        <id>Q69YG0</id>
        <label>TMEM42</label>
    </interactant>
    <organismsDiffer>false</organismsDiffer>
    <experiments>3</experiments>
</comment>
<comment type="interaction">
    <interactant intactId="EBI-18535450">
        <id>Q9GZR5</id>
    </interactant>
    <interactant intactId="EBI-13076526">
        <id>Q2T9K0-2</id>
        <label>TMEM44</label>
    </interactant>
    <organismsDiffer>false</organismsDiffer>
    <experiments>3</experiments>
</comment>
<comment type="interaction">
    <interactant intactId="EBI-18535450">
        <id>Q9GZR5</id>
    </interactant>
    <interactant intactId="EBI-16746122">
        <id>Q9NSU2-1</id>
        <label>TREX1</label>
    </interactant>
    <organismsDiffer>false</organismsDiffer>
    <experiments>3</experiments>
</comment>
<comment type="interaction">
    <interactant intactId="EBI-18535450">
        <id>Q9GZR5</id>
    </interactant>
    <interactant intactId="EBI-12003468">
        <id>A0AVG3</id>
        <label>TSNARE1</label>
    </interactant>
    <organismsDiffer>false</organismsDiffer>
    <experiments>3</experiments>
</comment>
<comment type="interaction">
    <interactant intactId="EBI-18535450">
        <id>Q9GZR5</id>
    </interactant>
    <interactant intactId="EBI-11988865">
        <id>A5PKU2</id>
        <label>TUSC5</label>
    </interactant>
    <organismsDiffer>false</organismsDiffer>
    <experiments>3</experiments>
</comment>
<comment type="interaction">
    <interactant intactId="EBI-18535450">
        <id>Q9GZR5</id>
    </interactant>
    <interactant intactId="EBI-988826">
        <id>Q9Y385</id>
        <label>UBE2J1</label>
    </interactant>
    <organismsDiffer>false</organismsDiffer>
    <experiments>3</experiments>
</comment>
<comment type="interaction">
    <interactant intactId="EBI-18535450">
        <id>Q9GZR5</id>
    </interactant>
    <interactant intactId="EBI-7601760">
        <id>Q53HI1</id>
        <label>UNC50</label>
    </interactant>
    <organismsDiffer>false</organismsDiffer>
    <experiments>3</experiments>
</comment>
<comment type="interaction">
    <interactant intactId="EBI-18535450">
        <id>Q9GZR5</id>
    </interactant>
    <interactant intactId="EBI-12097582">
        <id>P23763-3</id>
        <label>VAMP1</label>
    </interactant>
    <organismsDiffer>false</organismsDiffer>
    <experiments>3</experiments>
</comment>
<comment type="interaction">
    <interactant intactId="EBI-18535450">
        <id>Q9GZR5</id>
    </interactant>
    <interactant intactId="EBI-722343">
        <id>Q15836</id>
        <label>VAMP3</label>
    </interactant>
    <organismsDiffer>false</organismsDiffer>
    <experiments>3</experiments>
</comment>
<comment type="interaction">
    <interactant intactId="EBI-18535450">
        <id>Q9GZR5</id>
    </interactant>
    <interactant intactId="EBI-744953">
        <id>O75379</id>
        <label>VAMP4</label>
    </interactant>
    <organismsDiffer>false</organismsDiffer>
    <experiments>3</experiments>
</comment>
<comment type="interaction">
    <interactant intactId="EBI-18535450">
        <id>Q9GZR5</id>
    </interactant>
    <interactant intactId="EBI-10191195">
        <id>O95183</id>
        <label>VAMP5</label>
    </interactant>
    <organismsDiffer>false</organismsDiffer>
    <experiments>3</experiments>
</comment>
<comment type="interaction">
    <interactant intactId="EBI-18535450">
        <id>Q9GZR5</id>
    </interactant>
    <interactant intactId="EBI-1188298">
        <id>O95292</id>
        <label>VAPB</label>
    </interactant>
    <organismsDiffer>false</organismsDiffer>
    <experiments>3</experiments>
</comment>
<comment type="interaction">
    <interactant intactId="EBI-18535450">
        <id>Q9GZR5</id>
    </interactant>
    <interactant intactId="EBI-2799703">
        <id>O95070</id>
        <label>YIF1A</label>
    </interactant>
    <organismsDiffer>false</organismsDiffer>
    <experiments>3</experiments>
</comment>
<comment type="interaction">
    <interactant intactId="EBI-18535450">
        <id>Q9GZR5</id>
    </interactant>
    <interactant intactId="EBI-751210">
        <id>Q96EC8</id>
        <label>YIPF6</label>
    </interactant>
    <organismsDiffer>false</organismsDiffer>
    <experiments>3</experiments>
</comment>
<comment type="interaction">
    <interactant intactId="EBI-18535450">
        <id>Q9GZR5</id>
    </interactant>
    <interactant intactId="EBI-2849773">
        <id>Q8IVQ6</id>
        <label>ZDHHC21</label>
    </interactant>
    <organismsDiffer>false</organismsDiffer>
    <experiments>3</experiments>
</comment>
<comment type="interaction">
    <interactant intactId="EBI-18535450">
        <id>Q9GZR5</id>
    </interactant>
    <interactant intactId="EBI-718439">
        <id>O95159</id>
        <label>ZFPL1</label>
    </interactant>
    <organismsDiffer>false</organismsDiffer>
    <experiments>3</experiments>
</comment>
<comment type="subcellular location">
    <subcellularLocation>
        <location evidence="2 7 8">Endoplasmic reticulum membrane</location>
        <topology evidence="2">Multi-pass membrane protein</topology>
    </subcellularLocation>
</comment>
<comment type="tissue specificity">
    <text evidence="8">Expressed in the retina and at much lower level in the brain. Ubiquitous, highest expression in thymus, followed by testis, small intestine, ovary, and prostate. Little or no expression in heart, lung, liver, or leukocates.</text>
</comment>
<comment type="domain">
    <text evidence="2">The C-terminal di-lysine motif confers endoplasmic reticulum localization.</text>
</comment>
<comment type="PTM">
    <text evidence="1">N-glycosylated.</text>
</comment>
<comment type="disease" evidence="4 5">
    <disease id="DI-01085">
        <name>Stargardt disease 3</name>
        <acronym>STGD3</acronym>
        <description>A common hereditary macular degeneration. It is characterized by decreased central vision, atrophy of the macula and underlying retinal pigment epithelium, and frequent presence of prominent flecks in the posterior pole of the retina.</description>
        <dbReference type="MIM" id="600110"/>
    </disease>
    <text>The disease is caused by variants affecting the gene represented in this entry.</text>
</comment>
<comment type="disease" evidence="9">
    <disease id="DI-03376">
        <name>Ichthyosis, spastic quadriplegia, and impaired intellectual development</name>
        <acronym>ISQMR</acronym>
        <description>A severe autosomal recessive disorder characterized by ichthyosis apparent from birth, profound psychomotor retardation with essentially no development, spastic quadriplegia, and seizures.</description>
        <dbReference type="MIM" id="614457"/>
    </disease>
    <text>The disease is caused by variants affecting the gene represented in this entry.</text>
</comment>
<comment type="disease" evidence="11">
    <disease id="DI-04188">
        <name>Spinocerebellar ataxia 34</name>
        <acronym>SCA34</acronym>
        <description>A form of spinocerebellar ataxia, a clinically and genetically heterogeneous group of cerebellar disorders. Patients show progressive incoordination of gait and often poor coordination of hands, speech and eye movements, due to degeneration of the cerebellum with variable involvement of the brainstem and spinal cord. SCA34 is an autosomal dominant form characterized by the association of progressive cerebellar ataxia with erythrokeratodermia variabilis.</description>
        <dbReference type="MIM" id="133190"/>
    </disease>
    <text>The disease is caused by variants affecting the gene represented in this entry.</text>
</comment>
<comment type="similarity">
    <text evidence="2">Belongs to the ELO family. ELOVL4 subfamily.</text>
</comment>
<keyword id="KW-0225">Disease variant</keyword>
<keyword id="KW-0256">Endoplasmic reticulum</keyword>
<keyword id="KW-0275">Fatty acid biosynthesis</keyword>
<keyword id="KW-0276">Fatty acid metabolism</keyword>
<keyword id="KW-0325">Glycoprotein</keyword>
<keyword id="KW-0977">Ichthyosis</keyword>
<keyword id="KW-0991">Intellectual disability</keyword>
<keyword id="KW-0444">Lipid biosynthesis</keyword>
<keyword id="KW-0443">Lipid metabolism</keyword>
<keyword id="KW-0472">Membrane</keyword>
<keyword id="KW-0523">Neurodegeneration</keyword>
<keyword id="KW-1267">Proteomics identification</keyword>
<keyword id="KW-1185">Reference proteome</keyword>
<keyword id="KW-0950">Spinocerebellar ataxia</keyword>
<keyword id="KW-0751">Stargardt disease</keyword>
<keyword id="KW-0808">Transferase</keyword>
<keyword id="KW-0812">Transmembrane</keyword>
<keyword id="KW-1133">Transmembrane helix</keyword>
<evidence type="ECO:0000250" key="1">
    <source>
        <dbReference type="UniProtKB" id="Q9EQC4"/>
    </source>
</evidence>
<evidence type="ECO:0000255" key="2">
    <source>
        <dbReference type="HAMAP-Rule" id="MF_03204"/>
    </source>
</evidence>
<evidence type="ECO:0000256" key="3">
    <source>
        <dbReference type="SAM" id="MobiDB-lite"/>
    </source>
</evidence>
<evidence type="ECO:0000269" key="4">
    <source>
    </source>
</evidence>
<evidence type="ECO:0000269" key="5">
    <source>
    </source>
</evidence>
<evidence type="ECO:0000269" key="6">
    <source>
    </source>
</evidence>
<evidence type="ECO:0000269" key="7">
    <source>
    </source>
</evidence>
<evidence type="ECO:0000269" key="8">
    <source>
    </source>
</evidence>
<evidence type="ECO:0000269" key="9">
    <source>
    </source>
</evidence>
<evidence type="ECO:0000269" key="10">
    <source>
    </source>
</evidence>
<evidence type="ECO:0000269" key="11">
    <source>
    </source>
</evidence>
<evidence type="ECO:0000305" key="12"/>
<evidence type="ECO:0000305" key="13">
    <source>
    </source>
</evidence>
<evidence type="ECO:0000305" key="14">
    <source>
    </source>
</evidence>
<accession>Q9GZR5</accession>
<accession>B2R6B5</accession>
<accession>Q5TCS2</accession>
<accession>Q86YJ1</accession>
<accession>Q9H139</accession>
<gene>
    <name evidence="2" type="primary">ELOVL4</name>
</gene>
<protein>
    <recommendedName>
        <fullName evidence="2">Very long chain fatty acid elongase 4</fullName>
        <ecNumber evidence="2 8 10">2.3.1.199</ecNumber>
    </recommendedName>
    <alternativeName>
        <fullName evidence="2">3-keto acyl-CoA synthase ELOVL4</fullName>
    </alternativeName>
    <alternativeName>
        <fullName evidence="2">ELOVL fatty acid elongase 4</fullName>
        <shortName evidence="2">ELOVL FA elongase 4</shortName>
    </alternativeName>
    <alternativeName>
        <fullName evidence="2">Elongation of very long chain fatty acids protein 4</fullName>
    </alternativeName>
    <alternativeName>
        <fullName evidence="2">Very long chain 3-ketoacyl-CoA synthase 4</fullName>
    </alternativeName>
    <alternativeName>
        <fullName evidence="2">Very long chain 3-oxoacyl-CoA synthase 4</fullName>
    </alternativeName>
</protein>
<name>ELOV4_HUMAN</name>
<feature type="chain" id="PRO_0000207542" description="Very long chain fatty acid elongase 4">
    <location>
        <begin position="1"/>
        <end position="314"/>
    </location>
</feature>
<feature type="transmembrane region" description="Helical" evidence="2">
    <location>
        <begin position="42"/>
        <end position="62"/>
    </location>
</feature>
<feature type="transmembrane region" description="Helical" evidence="2">
    <location>
        <begin position="78"/>
        <end position="98"/>
    </location>
</feature>
<feature type="transmembrane region" description="Helical" evidence="2">
    <location>
        <begin position="127"/>
        <end position="147"/>
    </location>
</feature>
<feature type="transmembrane region" description="Helical" evidence="2">
    <location>
        <begin position="165"/>
        <end position="185"/>
    </location>
</feature>
<feature type="transmembrane region" description="Helical" evidence="2">
    <location>
        <begin position="188"/>
        <end position="208"/>
    </location>
</feature>
<feature type="transmembrane region" description="Helical" evidence="2">
    <location>
        <begin position="217"/>
        <end position="237"/>
    </location>
</feature>
<feature type="transmembrane region" description="Helical" evidence="2">
    <location>
        <begin position="247"/>
        <end position="267"/>
    </location>
</feature>
<feature type="region of interest" description="Disordered" evidence="3">
    <location>
        <begin position="275"/>
        <end position="314"/>
    </location>
</feature>
<feature type="short sequence motif" description="Di-lysine motif" evidence="2">
    <location>
        <begin position="310"/>
        <end position="314"/>
    </location>
</feature>
<feature type="compositionally biased region" description="Basic and acidic residues" evidence="3">
    <location>
        <begin position="293"/>
        <end position="304"/>
    </location>
</feature>
<feature type="compositionally biased region" description="Basic residues" evidence="3">
    <location>
        <begin position="305"/>
        <end position="314"/>
    </location>
</feature>
<feature type="glycosylation site" description="N-linked (GlcNAc...) asparagine" evidence="2 7">
    <location>
        <position position="20"/>
    </location>
</feature>
<feature type="sequence variant" id="VAR_072565" description="In SCA34; dbSNP:rs587777598." evidence="11">
    <original>L</original>
    <variation>F</variation>
    <location>
        <position position="168"/>
    </location>
</feature>
<feature type="sequence variant" id="VAR_017043" description="In dbSNP:rs148594713." evidence="6">
    <original>I</original>
    <variation>T</variation>
    <location>
        <position position="267"/>
    </location>
</feature>
<feature type="sequence variant" id="VAR_012492" description="In dbSNP:rs3812153." evidence="4 6">
    <original>M</original>
    <variation>V</variation>
    <location>
        <position position="299"/>
    </location>
</feature>
<feature type="sequence conflict" description="In Ref. 6; AAH38506." evidence="12" ref="6">
    <original>Q</original>
    <variation>R</variation>
    <location>
        <position position="44"/>
    </location>
</feature>
<reference key="1">
    <citation type="journal article" date="2001" name="Nat. Genet.">
        <title>A 5-bp deletion in ELOVL4 is associated with two related forms of autosomal dominant macular dystrophy.</title>
        <authorList>
            <person name="Zhang K."/>
            <person name="Kniazeva M."/>
            <person name="Han M."/>
            <person name="Li W."/>
            <person name="Yu Z."/>
            <person name="Yang Z."/>
            <person name="Li Y."/>
            <person name="Metzker M.L."/>
            <person name="Allikmets R."/>
            <person name="Zack D.J."/>
            <person name="Kakuk L.E."/>
            <person name="Lagali P.S."/>
            <person name="Wong P.W."/>
            <person name="McDonald I.M."/>
            <person name="Sieving P.A."/>
            <person name="Figueroa D.J."/>
            <person name="Austin C.P."/>
            <person name="Gould R.J."/>
            <person name="Ayyagari R."/>
            <person name="Petrukhin K."/>
        </authorList>
    </citation>
    <scope>NUCLEOTIDE SEQUENCE [GENOMIC DNA / MRNA]</scope>
    <scope>VARIANT VAL-299</scope>
    <scope>DISEASE</scope>
    <source>
        <tissue>Retina</tissue>
    </source>
</reference>
<reference key="2">
    <citation type="journal article" date="2001" name="Invest. Ophthalmol. Vis. Sci.">
        <title>A novel gene for autosomal dominant Stargardt-like macular dystrophy with homology to the SUR4 protein family.</title>
        <authorList>
            <person name="Edwards A.O."/>
            <person name="Donoso L.A."/>
            <person name="Ritter R. III"/>
        </authorList>
    </citation>
    <scope>NUCLEOTIDE SEQUENCE [MRNA]</scope>
    <scope>INVOLVEMENT IN STGD3</scope>
</reference>
<reference key="3">
    <citation type="journal article" date="2004" name="Nat. Genet.">
        <title>Complete sequencing and characterization of 21,243 full-length human cDNAs.</title>
        <authorList>
            <person name="Ota T."/>
            <person name="Suzuki Y."/>
            <person name="Nishikawa T."/>
            <person name="Otsuki T."/>
            <person name="Sugiyama T."/>
            <person name="Irie R."/>
            <person name="Wakamatsu A."/>
            <person name="Hayashi K."/>
            <person name="Sato H."/>
            <person name="Nagai K."/>
            <person name="Kimura K."/>
            <person name="Makita H."/>
            <person name="Sekine M."/>
            <person name="Obayashi M."/>
            <person name="Nishi T."/>
            <person name="Shibahara T."/>
            <person name="Tanaka T."/>
            <person name="Ishii S."/>
            <person name="Yamamoto J."/>
            <person name="Saito K."/>
            <person name="Kawai Y."/>
            <person name="Isono Y."/>
            <person name="Nakamura Y."/>
            <person name="Nagahari K."/>
            <person name="Murakami K."/>
            <person name="Yasuda T."/>
            <person name="Iwayanagi T."/>
            <person name="Wagatsuma M."/>
            <person name="Shiratori A."/>
            <person name="Sudo H."/>
            <person name="Hosoiri T."/>
            <person name="Kaku Y."/>
            <person name="Kodaira H."/>
            <person name="Kondo H."/>
            <person name="Sugawara M."/>
            <person name="Takahashi M."/>
            <person name="Kanda K."/>
            <person name="Yokoi T."/>
            <person name="Furuya T."/>
            <person name="Kikkawa E."/>
            <person name="Omura Y."/>
            <person name="Abe K."/>
            <person name="Kamihara K."/>
            <person name="Katsuta N."/>
            <person name="Sato K."/>
            <person name="Tanikawa M."/>
            <person name="Yamazaki M."/>
            <person name="Ninomiya K."/>
            <person name="Ishibashi T."/>
            <person name="Yamashita H."/>
            <person name="Murakawa K."/>
            <person name="Fujimori K."/>
            <person name="Tanai H."/>
            <person name="Kimata M."/>
            <person name="Watanabe M."/>
            <person name="Hiraoka S."/>
            <person name="Chiba Y."/>
            <person name="Ishida S."/>
            <person name="Ono Y."/>
            <person name="Takiguchi S."/>
            <person name="Watanabe S."/>
            <person name="Yosida M."/>
            <person name="Hotuta T."/>
            <person name="Kusano J."/>
            <person name="Kanehori K."/>
            <person name="Takahashi-Fujii A."/>
            <person name="Hara H."/>
            <person name="Tanase T.-O."/>
            <person name="Nomura Y."/>
            <person name="Togiya S."/>
            <person name="Komai F."/>
            <person name="Hara R."/>
            <person name="Takeuchi K."/>
            <person name="Arita M."/>
            <person name="Imose N."/>
            <person name="Musashino K."/>
            <person name="Yuuki H."/>
            <person name="Oshima A."/>
            <person name="Sasaki N."/>
            <person name="Aotsuka S."/>
            <person name="Yoshikawa Y."/>
            <person name="Matsunawa H."/>
            <person name="Ichihara T."/>
            <person name="Shiohata N."/>
            <person name="Sano S."/>
            <person name="Moriya S."/>
            <person name="Momiyama H."/>
            <person name="Satoh N."/>
            <person name="Takami S."/>
            <person name="Terashima Y."/>
            <person name="Suzuki O."/>
            <person name="Nakagawa S."/>
            <person name="Senoh A."/>
            <person name="Mizoguchi H."/>
            <person name="Goto Y."/>
            <person name="Shimizu F."/>
            <person name="Wakebe H."/>
            <person name="Hishigaki H."/>
            <person name="Watanabe T."/>
            <person name="Sugiyama A."/>
            <person name="Takemoto M."/>
            <person name="Kawakami B."/>
            <person name="Yamazaki M."/>
            <person name="Watanabe K."/>
            <person name="Kumagai A."/>
            <person name="Itakura S."/>
            <person name="Fukuzumi Y."/>
            <person name="Fujimori Y."/>
            <person name="Komiyama M."/>
            <person name="Tashiro H."/>
            <person name="Tanigami A."/>
            <person name="Fujiwara T."/>
            <person name="Ono T."/>
            <person name="Yamada K."/>
            <person name="Fujii Y."/>
            <person name="Ozaki K."/>
            <person name="Hirao M."/>
            <person name="Ohmori Y."/>
            <person name="Kawabata A."/>
            <person name="Hikiji T."/>
            <person name="Kobatake N."/>
            <person name="Inagaki H."/>
            <person name="Ikema Y."/>
            <person name="Okamoto S."/>
            <person name="Okitani R."/>
            <person name="Kawakami T."/>
            <person name="Noguchi S."/>
            <person name="Itoh T."/>
            <person name="Shigeta K."/>
            <person name="Senba T."/>
            <person name="Matsumura K."/>
            <person name="Nakajima Y."/>
            <person name="Mizuno T."/>
            <person name="Morinaga M."/>
            <person name="Sasaki M."/>
            <person name="Togashi T."/>
            <person name="Oyama M."/>
            <person name="Hata H."/>
            <person name="Watanabe M."/>
            <person name="Komatsu T."/>
            <person name="Mizushima-Sugano J."/>
            <person name="Satoh T."/>
            <person name="Shirai Y."/>
            <person name="Takahashi Y."/>
            <person name="Nakagawa K."/>
            <person name="Okumura K."/>
            <person name="Nagase T."/>
            <person name="Nomura N."/>
            <person name="Kikuchi H."/>
            <person name="Masuho Y."/>
            <person name="Yamashita R."/>
            <person name="Nakai K."/>
            <person name="Yada T."/>
            <person name="Nakamura Y."/>
            <person name="Ohara O."/>
            <person name="Isogai T."/>
            <person name="Sugano S."/>
        </authorList>
    </citation>
    <scope>NUCLEOTIDE SEQUENCE [LARGE SCALE MRNA]</scope>
    <source>
        <tissue>Brain</tissue>
        <tissue>Thalamus</tissue>
    </source>
</reference>
<reference key="4">
    <citation type="journal article" date="2003" name="Nature">
        <title>The DNA sequence and analysis of human chromosome 6.</title>
        <authorList>
            <person name="Mungall A.J."/>
            <person name="Palmer S.A."/>
            <person name="Sims S.K."/>
            <person name="Edwards C.A."/>
            <person name="Ashurst J.L."/>
            <person name="Wilming L."/>
            <person name="Jones M.C."/>
            <person name="Horton R."/>
            <person name="Hunt S.E."/>
            <person name="Scott C.E."/>
            <person name="Gilbert J.G.R."/>
            <person name="Clamp M.E."/>
            <person name="Bethel G."/>
            <person name="Milne S."/>
            <person name="Ainscough R."/>
            <person name="Almeida J.P."/>
            <person name="Ambrose K.D."/>
            <person name="Andrews T.D."/>
            <person name="Ashwell R.I.S."/>
            <person name="Babbage A.K."/>
            <person name="Bagguley C.L."/>
            <person name="Bailey J."/>
            <person name="Banerjee R."/>
            <person name="Barker D.J."/>
            <person name="Barlow K.F."/>
            <person name="Bates K."/>
            <person name="Beare D.M."/>
            <person name="Beasley H."/>
            <person name="Beasley O."/>
            <person name="Bird C.P."/>
            <person name="Blakey S.E."/>
            <person name="Bray-Allen S."/>
            <person name="Brook J."/>
            <person name="Brown A.J."/>
            <person name="Brown J.Y."/>
            <person name="Burford D.C."/>
            <person name="Burrill W."/>
            <person name="Burton J."/>
            <person name="Carder C."/>
            <person name="Carter N.P."/>
            <person name="Chapman J.C."/>
            <person name="Clark S.Y."/>
            <person name="Clark G."/>
            <person name="Clee C.M."/>
            <person name="Clegg S."/>
            <person name="Cobley V."/>
            <person name="Collier R.E."/>
            <person name="Collins J.E."/>
            <person name="Colman L.K."/>
            <person name="Corby N.R."/>
            <person name="Coville G.J."/>
            <person name="Culley K.M."/>
            <person name="Dhami P."/>
            <person name="Davies J."/>
            <person name="Dunn M."/>
            <person name="Earthrowl M.E."/>
            <person name="Ellington A.E."/>
            <person name="Evans K.A."/>
            <person name="Faulkner L."/>
            <person name="Francis M.D."/>
            <person name="Frankish A."/>
            <person name="Frankland J."/>
            <person name="French L."/>
            <person name="Garner P."/>
            <person name="Garnett J."/>
            <person name="Ghori M.J."/>
            <person name="Gilby L.M."/>
            <person name="Gillson C.J."/>
            <person name="Glithero R.J."/>
            <person name="Grafham D.V."/>
            <person name="Grant M."/>
            <person name="Gribble S."/>
            <person name="Griffiths C."/>
            <person name="Griffiths M.N.D."/>
            <person name="Hall R."/>
            <person name="Halls K.S."/>
            <person name="Hammond S."/>
            <person name="Harley J.L."/>
            <person name="Hart E.A."/>
            <person name="Heath P.D."/>
            <person name="Heathcott R."/>
            <person name="Holmes S.J."/>
            <person name="Howden P.J."/>
            <person name="Howe K.L."/>
            <person name="Howell G.R."/>
            <person name="Huckle E."/>
            <person name="Humphray S.J."/>
            <person name="Humphries M.D."/>
            <person name="Hunt A.R."/>
            <person name="Johnson C.M."/>
            <person name="Joy A.A."/>
            <person name="Kay M."/>
            <person name="Keenan S.J."/>
            <person name="Kimberley A.M."/>
            <person name="King A."/>
            <person name="Laird G.K."/>
            <person name="Langford C."/>
            <person name="Lawlor S."/>
            <person name="Leongamornlert D.A."/>
            <person name="Leversha M."/>
            <person name="Lloyd C.R."/>
            <person name="Lloyd D.M."/>
            <person name="Loveland J.E."/>
            <person name="Lovell J."/>
            <person name="Martin S."/>
            <person name="Mashreghi-Mohammadi M."/>
            <person name="Maslen G.L."/>
            <person name="Matthews L."/>
            <person name="McCann O.T."/>
            <person name="McLaren S.J."/>
            <person name="McLay K."/>
            <person name="McMurray A."/>
            <person name="Moore M.J.F."/>
            <person name="Mullikin J.C."/>
            <person name="Niblett D."/>
            <person name="Nickerson T."/>
            <person name="Novik K.L."/>
            <person name="Oliver K."/>
            <person name="Overton-Larty E.K."/>
            <person name="Parker A."/>
            <person name="Patel R."/>
            <person name="Pearce A.V."/>
            <person name="Peck A.I."/>
            <person name="Phillimore B.J.C.T."/>
            <person name="Phillips S."/>
            <person name="Plumb R.W."/>
            <person name="Porter K.M."/>
            <person name="Ramsey Y."/>
            <person name="Ranby S.A."/>
            <person name="Rice C.M."/>
            <person name="Ross M.T."/>
            <person name="Searle S.M."/>
            <person name="Sehra H.K."/>
            <person name="Sheridan E."/>
            <person name="Skuce C.D."/>
            <person name="Smith S."/>
            <person name="Smith M."/>
            <person name="Spraggon L."/>
            <person name="Squares S.L."/>
            <person name="Steward C.A."/>
            <person name="Sycamore N."/>
            <person name="Tamlyn-Hall G."/>
            <person name="Tester J."/>
            <person name="Theaker A.J."/>
            <person name="Thomas D.W."/>
            <person name="Thorpe A."/>
            <person name="Tracey A."/>
            <person name="Tromans A."/>
            <person name="Tubby B."/>
            <person name="Wall M."/>
            <person name="Wallis J.M."/>
            <person name="West A.P."/>
            <person name="White S.S."/>
            <person name="Whitehead S.L."/>
            <person name="Whittaker H."/>
            <person name="Wild A."/>
            <person name="Willey D.J."/>
            <person name="Wilmer T.E."/>
            <person name="Wood J.M."/>
            <person name="Wray P.W."/>
            <person name="Wyatt J.C."/>
            <person name="Young L."/>
            <person name="Younger R.M."/>
            <person name="Bentley D.R."/>
            <person name="Coulson A."/>
            <person name="Durbin R.M."/>
            <person name="Hubbard T."/>
            <person name="Sulston J.E."/>
            <person name="Dunham I."/>
            <person name="Rogers J."/>
            <person name="Beck S."/>
        </authorList>
    </citation>
    <scope>NUCLEOTIDE SEQUENCE [LARGE SCALE GENOMIC DNA]</scope>
</reference>
<reference key="5">
    <citation type="submission" date="2005-09" db="EMBL/GenBank/DDBJ databases">
        <authorList>
            <person name="Mural R.J."/>
            <person name="Istrail S."/>
            <person name="Sutton G.G."/>
            <person name="Florea L."/>
            <person name="Halpern A.L."/>
            <person name="Mobarry C.M."/>
            <person name="Lippert R."/>
            <person name="Walenz B."/>
            <person name="Shatkay H."/>
            <person name="Dew I."/>
            <person name="Miller J.R."/>
            <person name="Flanigan M.J."/>
            <person name="Edwards N.J."/>
            <person name="Bolanos R."/>
            <person name="Fasulo D."/>
            <person name="Halldorsson B.V."/>
            <person name="Hannenhalli S."/>
            <person name="Turner R."/>
            <person name="Yooseph S."/>
            <person name="Lu F."/>
            <person name="Nusskern D.R."/>
            <person name="Shue B.C."/>
            <person name="Zheng X.H."/>
            <person name="Zhong F."/>
            <person name="Delcher A.L."/>
            <person name="Huson D.H."/>
            <person name="Kravitz S.A."/>
            <person name="Mouchard L."/>
            <person name="Reinert K."/>
            <person name="Remington K.A."/>
            <person name="Clark A.G."/>
            <person name="Waterman M.S."/>
            <person name="Eichler E.E."/>
            <person name="Adams M.D."/>
            <person name="Hunkapiller M.W."/>
            <person name="Myers E.W."/>
            <person name="Venter J.C."/>
        </authorList>
    </citation>
    <scope>NUCLEOTIDE SEQUENCE [LARGE SCALE GENOMIC DNA]</scope>
</reference>
<reference key="6">
    <citation type="journal article" date="2004" name="Genome Res.">
        <title>The status, quality, and expansion of the NIH full-length cDNA project: the Mammalian Gene Collection (MGC).</title>
        <authorList>
            <consortium name="The MGC Project Team"/>
        </authorList>
    </citation>
    <scope>NUCLEOTIDE SEQUENCE [LARGE SCALE MRNA]</scope>
    <source>
        <tissue>Brain</tissue>
    </source>
</reference>
<reference key="7">
    <citation type="journal article" date="2005" name="J. Biol. Chem.">
        <title>Dominant negative mechanism underlies autosomal dominant Stargardt-like macular dystrophy linked to mutations in ELOVL4.</title>
        <authorList>
            <person name="Grayson C."/>
            <person name="Molday R.S."/>
        </authorList>
    </citation>
    <scope>SUBCELLULAR LOCATION</scope>
    <scope>OLIGOMERIZATION</scope>
    <scope>GLYCOSYLATION AT ASN-20</scope>
</reference>
<reference key="8">
    <citation type="journal article" date="2010" name="Proc. Natl. Acad. Sci. U.S.A.">
        <title>ELOVL1 production of C24 acyl-CoAs is linked to C24 sphingolipid synthesis.</title>
        <authorList>
            <person name="Ohno Y."/>
            <person name="Suto S."/>
            <person name="Yamanaka M."/>
            <person name="Mizutani Y."/>
            <person name="Mitsutake S."/>
            <person name="Igarashi Y."/>
            <person name="Sassa T."/>
            <person name="Kihara A."/>
        </authorList>
    </citation>
    <scope>FUNCTION</scope>
    <scope>CATALYTIC ACTIVITY</scope>
    <scope>PATHWAY</scope>
    <scope>SUBCELLULAR LOCATION</scope>
    <scope>TISSUE SPECIFICITY</scope>
</reference>
<reference key="9">
    <citation type="journal article" date="2011" name="Am. J. Hum. Genet.">
        <title>Recessive mutations in ELOVL4 cause ichthyosis, intellectual disability, and spastic quadriplegia.</title>
        <authorList>
            <person name="Aldahmesh M.A."/>
            <person name="Mohamed J.Y."/>
            <person name="Alkuraya H.S."/>
            <person name="Verma I.C."/>
            <person name="Puri R.D."/>
            <person name="Alaiya A.A."/>
            <person name="Rizzo W.B."/>
            <person name="Alkuraya F.S."/>
        </authorList>
    </citation>
    <scope>PROBABLE ROLE IN BRAIN AND SKIN DEVELOPMENT</scope>
    <scope>INVOLVEMENT IN ISQMR</scope>
</reference>
<reference key="10">
    <citation type="journal article" date="2013" name="Proc. Natl. Acad. Sci. U.S.A.">
        <title>Role of ELOVL4 and very long-chain polyunsaturated fatty acids in mouse models of Stargardt type 3 retinal degeneration.</title>
        <authorList>
            <person name="Barabas P."/>
            <person name="Liu A."/>
            <person name="Xing W."/>
            <person name="Chen C.K."/>
            <person name="Tong Z."/>
            <person name="Watt C.B."/>
            <person name="Jones B.W."/>
            <person name="Bernstein P.S."/>
            <person name="Krizaj D."/>
        </authorList>
    </citation>
    <scope>FUNCTION</scope>
    <scope>CATALYTIC ACTIVITY</scope>
    <scope>PATHWAY</scope>
</reference>
<reference key="11">
    <citation type="journal article" date="2003" name="Mol. Vis.">
        <title>Evaluation of the ELOVL4 gene in patients with autosomal recessive retinitis pigmentosa and Leber congenital amaurosis.</title>
        <authorList>
            <person name="Rivolta C."/>
            <person name="Ayyagari R."/>
            <person name="Sieving P.A."/>
            <person name="Berson E.L."/>
            <person name="Dryja T.P."/>
        </authorList>
    </citation>
    <scope>VARIANTS THR-267 AND VAL-299</scope>
</reference>
<reference key="12">
    <citation type="journal article" date="2014" name="JAMA Neurol.">
        <title>Expanding the clinical phenotype associated with ELOVL4 mutation: study of a large French-Canadian family with autosomal dominant spinocerebellar ataxia and erythrokeratodermia.</title>
        <authorList>
            <person name="Cadieux-Dion M."/>
            <person name="Turcotte-Gauthier M."/>
            <person name="Noreau A."/>
            <person name="Martin C."/>
            <person name="Meloche C."/>
            <person name="Gravel M."/>
            <person name="Drouin C.A."/>
            <person name="Rouleau G.A."/>
            <person name="Nguyen D.K."/>
            <person name="Cossette P."/>
        </authorList>
    </citation>
    <scope>INVOLVEMENT IN SCA34</scope>
    <scope>VARIANT SCA34 PHE-168</scope>
</reference>
<proteinExistence type="evidence at protein level"/>
<dbReference type="EC" id="2.3.1.199" evidence="2 8 10"/>
<dbReference type="EMBL" id="AF279654">
    <property type="protein sequence ID" value="AAG47669.1"/>
    <property type="molecule type" value="Genomic_DNA"/>
</dbReference>
<dbReference type="EMBL" id="AF279649">
    <property type="protein sequence ID" value="AAG47669.1"/>
    <property type="status" value="JOINED"/>
    <property type="molecule type" value="Genomic_DNA"/>
</dbReference>
<dbReference type="EMBL" id="AF279650">
    <property type="protein sequence ID" value="AAG47669.1"/>
    <property type="status" value="JOINED"/>
    <property type="molecule type" value="Genomic_DNA"/>
</dbReference>
<dbReference type="EMBL" id="AF279651">
    <property type="protein sequence ID" value="AAG47669.1"/>
    <property type="status" value="JOINED"/>
    <property type="molecule type" value="Genomic_DNA"/>
</dbReference>
<dbReference type="EMBL" id="AF279652">
    <property type="protein sequence ID" value="AAG47669.1"/>
    <property type="status" value="JOINED"/>
    <property type="molecule type" value="Genomic_DNA"/>
</dbReference>
<dbReference type="EMBL" id="AF279653">
    <property type="protein sequence ID" value="AAG47669.1"/>
    <property type="status" value="JOINED"/>
    <property type="molecule type" value="Genomic_DNA"/>
</dbReference>
<dbReference type="EMBL" id="AF277094">
    <property type="protein sequence ID" value="AAG47668.1"/>
    <property type="molecule type" value="mRNA"/>
</dbReference>
<dbReference type="EMBL" id="AY037298">
    <property type="protein sequence ID" value="AAK68639.1"/>
    <property type="molecule type" value="mRNA"/>
</dbReference>
<dbReference type="EMBL" id="AK055277">
    <property type="protein sequence ID" value="BAB70895.1"/>
    <property type="molecule type" value="mRNA"/>
</dbReference>
<dbReference type="EMBL" id="AK312511">
    <property type="protein sequence ID" value="BAG35412.1"/>
    <property type="molecule type" value="mRNA"/>
</dbReference>
<dbReference type="EMBL" id="AL133475">
    <property type="status" value="NOT_ANNOTATED_CDS"/>
    <property type="molecule type" value="Genomic_DNA"/>
</dbReference>
<dbReference type="EMBL" id="AL132875">
    <property type="status" value="NOT_ANNOTATED_CDS"/>
    <property type="molecule type" value="Genomic_DNA"/>
</dbReference>
<dbReference type="EMBL" id="CH471051">
    <property type="protein sequence ID" value="EAW48701.1"/>
    <property type="molecule type" value="Genomic_DNA"/>
</dbReference>
<dbReference type="EMBL" id="BC038506">
    <property type="protein sequence ID" value="AAH38506.1"/>
    <property type="molecule type" value="mRNA"/>
</dbReference>
<dbReference type="CCDS" id="CCDS4992.1"/>
<dbReference type="RefSeq" id="NP_073563.1">
    <property type="nucleotide sequence ID" value="NM_022726.4"/>
</dbReference>
<dbReference type="SMR" id="Q9GZR5"/>
<dbReference type="BioGRID" id="112661">
    <property type="interactions" value="136"/>
</dbReference>
<dbReference type="FunCoup" id="Q9GZR5">
    <property type="interactions" value="899"/>
</dbReference>
<dbReference type="IntAct" id="Q9GZR5">
    <property type="interactions" value="111"/>
</dbReference>
<dbReference type="STRING" id="9606.ENSP00000358831"/>
<dbReference type="BindingDB" id="Q9GZR5"/>
<dbReference type="ChEMBL" id="CHEMBL5169195"/>
<dbReference type="DrugBank" id="DB09568">
    <property type="generic name" value="Omega-3-carboxylic acids"/>
</dbReference>
<dbReference type="DrugBank" id="DB09328">
    <property type="generic name" value="Vayarin"/>
</dbReference>
<dbReference type="SwissLipids" id="SLP:000000255"/>
<dbReference type="GlyCosmos" id="Q9GZR5">
    <property type="glycosylation" value="1 site, No reported glycans"/>
</dbReference>
<dbReference type="GlyGen" id="Q9GZR5">
    <property type="glycosylation" value="2 sites, 5 N-linked glycans (1 site), 1 O-linked glycan (1 site)"/>
</dbReference>
<dbReference type="iPTMnet" id="Q9GZR5"/>
<dbReference type="PhosphoSitePlus" id="Q9GZR5"/>
<dbReference type="SwissPalm" id="Q9GZR5"/>
<dbReference type="BioMuta" id="ELOVL4"/>
<dbReference type="DMDM" id="20137966"/>
<dbReference type="jPOST" id="Q9GZR5"/>
<dbReference type="MassIVE" id="Q9GZR5"/>
<dbReference type="PaxDb" id="9606-ENSP00000358831"/>
<dbReference type="PeptideAtlas" id="Q9GZR5"/>
<dbReference type="ProteomicsDB" id="80120"/>
<dbReference type="Pumba" id="Q9GZR5"/>
<dbReference type="Antibodypedia" id="31608">
    <property type="antibodies" value="268 antibodies from 27 providers"/>
</dbReference>
<dbReference type="DNASU" id="6785"/>
<dbReference type="Ensembl" id="ENST00000369816.5">
    <property type="protein sequence ID" value="ENSP00000358831.4"/>
    <property type="gene ID" value="ENSG00000118402.6"/>
</dbReference>
<dbReference type="GeneID" id="6785"/>
<dbReference type="KEGG" id="hsa:6785"/>
<dbReference type="MANE-Select" id="ENST00000369816.5">
    <property type="protein sequence ID" value="ENSP00000358831.4"/>
    <property type="RefSeq nucleotide sequence ID" value="NM_022726.4"/>
    <property type="RefSeq protein sequence ID" value="NP_073563.1"/>
</dbReference>
<dbReference type="UCSC" id="uc003pja.5">
    <property type="organism name" value="human"/>
</dbReference>
<dbReference type="AGR" id="HGNC:14415"/>
<dbReference type="CTD" id="6785"/>
<dbReference type="DisGeNET" id="6785"/>
<dbReference type="GeneCards" id="ELOVL4"/>
<dbReference type="HGNC" id="HGNC:14415">
    <property type="gene designation" value="ELOVL4"/>
</dbReference>
<dbReference type="HPA" id="ENSG00000118402">
    <property type="expression patterns" value="Tissue enhanced (lymphoid tissue, retina)"/>
</dbReference>
<dbReference type="MalaCards" id="ELOVL4"/>
<dbReference type="MIM" id="133190">
    <property type="type" value="phenotype"/>
</dbReference>
<dbReference type="MIM" id="600110">
    <property type="type" value="phenotype"/>
</dbReference>
<dbReference type="MIM" id="605512">
    <property type="type" value="gene"/>
</dbReference>
<dbReference type="MIM" id="614457">
    <property type="type" value="phenotype"/>
</dbReference>
<dbReference type="neXtProt" id="NX_Q9GZR5"/>
<dbReference type="OpenTargets" id="ENSG00000118402"/>
<dbReference type="Orphanet" id="352333">
    <property type="disease" value="Congenital ichthyosis-intellectual disability-spastic quadriplegia syndrome"/>
</dbReference>
<dbReference type="Orphanet" id="1955">
    <property type="disease" value="Spinocerebellar ataxia type 34"/>
</dbReference>
<dbReference type="Orphanet" id="827">
    <property type="disease" value="Stargardt disease"/>
</dbReference>
<dbReference type="PharmGKB" id="PA27763"/>
<dbReference type="VEuPathDB" id="HostDB:ENSG00000118402"/>
<dbReference type="eggNOG" id="KOG3071">
    <property type="taxonomic scope" value="Eukaryota"/>
</dbReference>
<dbReference type="GeneTree" id="ENSGT01050000244838"/>
<dbReference type="HOGENOM" id="CLU_048483_0_1_1"/>
<dbReference type="InParanoid" id="Q9GZR5"/>
<dbReference type="OMA" id="WTYFTST"/>
<dbReference type="OrthoDB" id="434092at2759"/>
<dbReference type="PAN-GO" id="Q9GZR5">
    <property type="GO annotations" value="7 GO annotations based on evolutionary models"/>
</dbReference>
<dbReference type="PhylomeDB" id="Q9GZR5"/>
<dbReference type="TreeFam" id="TF323454"/>
<dbReference type="BioCyc" id="MetaCyc:ENSG00000118402-MONOMER"/>
<dbReference type="PathwayCommons" id="Q9GZR5"/>
<dbReference type="Reactome" id="R-HSA-75876">
    <property type="pathway name" value="Synthesis of very long-chain fatty acyl-CoAs"/>
</dbReference>
<dbReference type="SignaLink" id="Q9GZR5"/>
<dbReference type="SIGNOR" id="Q9GZR5"/>
<dbReference type="UniPathway" id="UPA00094"/>
<dbReference type="BioGRID-ORCS" id="6785">
    <property type="hits" value="35 hits in 1155 CRISPR screens"/>
</dbReference>
<dbReference type="GeneWiki" id="ELOVL4"/>
<dbReference type="GenomeRNAi" id="6785"/>
<dbReference type="Pharos" id="Q9GZR5">
    <property type="development level" value="Tbio"/>
</dbReference>
<dbReference type="PRO" id="PR:Q9GZR5"/>
<dbReference type="Proteomes" id="UP000005640">
    <property type="component" value="Chromosome 6"/>
</dbReference>
<dbReference type="RNAct" id="Q9GZR5">
    <property type="molecule type" value="protein"/>
</dbReference>
<dbReference type="Bgee" id="ENSG00000118402">
    <property type="expression patterns" value="Expressed in upper leg skin and 152 other cell types or tissues"/>
</dbReference>
<dbReference type="GO" id="GO:0005783">
    <property type="term" value="C:endoplasmic reticulum"/>
    <property type="evidence" value="ECO:0000314"/>
    <property type="project" value="UniProtKB"/>
</dbReference>
<dbReference type="GO" id="GO:0005789">
    <property type="term" value="C:endoplasmic reticulum membrane"/>
    <property type="evidence" value="ECO:0000314"/>
    <property type="project" value="UniProtKB"/>
</dbReference>
<dbReference type="GO" id="GO:0009922">
    <property type="term" value="F:fatty acid elongase activity"/>
    <property type="evidence" value="ECO:0000250"/>
    <property type="project" value="UniProtKB"/>
</dbReference>
<dbReference type="GO" id="GO:0008020">
    <property type="term" value="F:G protein-coupled photoreceptor activity"/>
    <property type="evidence" value="ECO:0000303"/>
    <property type="project" value="UniProtKB"/>
</dbReference>
<dbReference type="GO" id="GO:0006633">
    <property type="term" value="P:fatty acid biosynthetic process"/>
    <property type="evidence" value="ECO:0000303"/>
    <property type="project" value="UniProtKB"/>
</dbReference>
<dbReference type="GO" id="GO:0034625">
    <property type="term" value="P:fatty acid elongation, monounsaturated fatty acid"/>
    <property type="evidence" value="ECO:0000318"/>
    <property type="project" value="GO_Central"/>
</dbReference>
<dbReference type="GO" id="GO:0034626">
    <property type="term" value="P:fatty acid elongation, polyunsaturated fatty acid"/>
    <property type="evidence" value="ECO:0000250"/>
    <property type="project" value="UniProtKB"/>
</dbReference>
<dbReference type="GO" id="GO:0019367">
    <property type="term" value="P:fatty acid elongation, saturated fatty acid"/>
    <property type="evidence" value="ECO:0000314"/>
    <property type="project" value="UniProtKB"/>
</dbReference>
<dbReference type="GO" id="GO:0035338">
    <property type="term" value="P:long-chain fatty-acyl-CoA biosynthetic process"/>
    <property type="evidence" value="ECO:0007669"/>
    <property type="project" value="UniProtKB-UniRule"/>
</dbReference>
<dbReference type="GO" id="GO:0030148">
    <property type="term" value="P:sphingolipid biosynthetic process"/>
    <property type="evidence" value="ECO:0000318"/>
    <property type="project" value="GO_Central"/>
</dbReference>
<dbReference type="GO" id="GO:0006636">
    <property type="term" value="P:unsaturated fatty acid biosynthetic process"/>
    <property type="evidence" value="ECO:0007669"/>
    <property type="project" value="UniProtKB-UniRule"/>
</dbReference>
<dbReference type="GO" id="GO:0042761">
    <property type="term" value="P:very long-chain fatty acid biosynthetic process"/>
    <property type="evidence" value="ECO:0000314"/>
    <property type="project" value="UniProtKB"/>
</dbReference>
<dbReference type="HAMAP" id="MF_03204">
    <property type="entry name" value="VLCF_elongase_4"/>
    <property type="match status" value="1"/>
</dbReference>
<dbReference type="InterPro" id="IPR030457">
    <property type="entry name" value="ELO_CS"/>
</dbReference>
<dbReference type="InterPro" id="IPR002076">
    <property type="entry name" value="ELO_fam"/>
</dbReference>
<dbReference type="InterPro" id="IPR033678">
    <property type="entry name" value="ELOVL4"/>
</dbReference>
<dbReference type="PANTHER" id="PTHR11157:SF12">
    <property type="entry name" value="ELONGATION OF VERY LONG CHAIN FATTY ACIDS PROTEIN 4"/>
    <property type="match status" value="1"/>
</dbReference>
<dbReference type="PANTHER" id="PTHR11157">
    <property type="entry name" value="FATTY ACID ACYL TRANSFERASE-RELATED"/>
    <property type="match status" value="1"/>
</dbReference>
<dbReference type="Pfam" id="PF01151">
    <property type="entry name" value="ELO"/>
    <property type="match status" value="1"/>
</dbReference>
<dbReference type="PROSITE" id="PS01188">
    <property type="entry name" value="ELO"/>
    <property type="match status" value="1"/>
</dbReference>
<sequence>MGLLDSEPGSVLNVVSTALNDTVEFYRWTWSIADKRVENWPLMQSPWPTLSISTLYLLFVWLGPKWMKDREPFQMRLVLIIYNFGMVLLNLFIFRELFMGSYNAGYSYICQSVDYSNNVHEVRIAAALWWYFVSKGVEYLDTVFFILRKKNNQVSFLHVYHHCTMFTLWWIGIKWVAGGQAFFGAQLNSFIHVIMYSYYGLTAFGPWIQKYLWWKRYLTMLQLIQFHVTIGHTALSLYTDCPFPKWMHWALIAYAISFIFLFLNFYIRTYKEPKKPKAGKTAMNGISANGVSKSEKQLMIENGKKQKNGKAKGD</sequence>
<organism>
    <name type="scientific">Homo sapiens</name>
    <name type="common">Human</name>
    <dbReference type="NCBI Taxonomy" id="9606"/>
    <lineage>
        <taxon>Eukaryota</taxon>
        <taxon>Metazoa</taxon>
        <taxon>Chordata</taxon>
        <taxon>Craniata</taxon>
        <taxon>Vertebrata</taxon>
        <taxon>Euteleostomi</taxon>
        <taxon>Mammalia</taxon>
        <taxon>Eutheria</taxon>
        <taxon>Euarchontoglires</taxon>
        <taxon>Primates</taxon>
        <taxon>Haplorrhini</taxon>
        <taxon>Catarrhini</taxon>
        <taxon>Hominidae</taxon>
        <taxon>Homo</taxon>
    </lineage>
</organism>